<reference key="1">
    <citation type="journal article" date="1997" name="Cell">
        <title>The mouse Fused locus encodes Axin, an inhibitor of the Wnt signaling pathway that regulates embryonic axis formation.</title>
        <authorList>
            <person name="Zeng L."/>
            <person name="Fagotto F."/>
            <person name="Zhang T."/>
            <person name="Hsu W."/>
            <person name="Vasicek T.J."/>
            <person name="Perry W.L. III"/>
            <person name="Lee J.J."/>
            <person name="Tilghman S.M."/>
            <person name="Gumbiner B.M."/>
            <person name="Costantini F."/>
        </authorList>
    </citation>
    <scope>NUCLEOTIDE SEQUENCE [MRNA] (ISOFORM 1)</scope>
</reference>
<reference key="2">
    <citation type="journal article" date="2001" name="Hum. Mol. Genet.">
        <title>Sequence, structure and pathology of the fully annotated terminal 2 Mb of the short arm of human chromosome 16.</title>
        <authorList>
            <person name="Daniels R.J."/>
            <person name="Peden J.F."/>
            <person name="Lloyd C."/>
            <person name="Horsley S.W."/>
            <person name="Clark K."/>
            <person name="Tufarelli C."/>
            <person name="Kearney L."/>
            <person name="Buckle V.J."/>
            <person name="Doggett N.A."/>
            <person name="Flint J."/>
            <person name="Higgs D.R."/>
        </authorList>
    </citation>
    <scope>NUCLEOTIDE SEQUENCE [LARGE SCALE GENOMIC DNA]</scope>
</reference>
<reference key="3">
    <citation type="journal article" date="2004" name="Nature">
        <title>The sequence and analysis of duplication-rich human chromosome 16.</title>
        <authorList>
            <person name="Martin J."/>
            <person name="Han C."/>
            <person name="Gordon L.A."/>
            <person name="Terry A."/>
            <person name="Prabhakar S."/>
            <person name="She X."/>
            <person name="Xie G."/>
            <person name="Hellsten U."/>
            <person name="Chan Y.M."/>
            <person name="Altherr M."/>
            <person name="Couronne O."/>
            <person name="Aerts A."/>
            <person name="Bajorek E."/>
            <person name="Black S."/>
            <person name="Blumer H."/>
            <person name="Branscomb E."/>
            <person name="Brown N.C."/>
            <person name="Bruno W.J."/>
            <person name="Buckingham J.M."/>
            <person name="Callen D.F."/>
            <person name="Campbell C.S."/>
            <person name="Campbell M.L."/>
            <person name="Campbell E.W."/>
            <person name="Caoile C."/>
            <person name="Challacombe J.F."/>
            <person name="Chasteen L.A."/>
            <person name="Chertkov O."/>
            <person name="Chi H.C."/>
            <person name="Christensen M."/>
            <person name="Clark L.M."/>
            <person name="Cohn J.D."/>
            <person name="Denys M."/>
            <person name="Detter J.C."/>
            <person name="Dickson M."/>
            <person name="Dimitrijevic-Bussod M."/>
            <person name="Escobar J."/>
            <person name="Fawcett J.J."/>
            <person name="Flowers D."/>
            <person name="Fotopulos D."/>
            <person name="Glavina T."/>
            <person name="Gomez M."/>
            <person name="Gonzales E."/>
            <person name="Goodstein D."/>
            <person name="Goodwin L.A."/>
            <person name="Grady D.L."/>
            <person name="Grigoriev I."/>
            <person name="Groza M."/>
            <person name="Hammon N."/>
            <person name="Hawkins T."/>
            <person name="Haydu L."/>
            <person name="Hildebrand C.E."/>
            <person name="Huang W."/>
            <person name="Israni S."/>
            <person name="Jett J."/>
            <person name="Jewett P.B."/>
            <person name="Kadner K."/>
            <person name="Kimball H."/>
            <person name="Kobayashi A."/>
            <person name="Krawczyk M.-C."/>
            <person name="Leyba T."/>
            <person name="Longmire J.L."/>
            <person name="Lopez F."/>
            <person name="Lou Y."/>
            <person name="Lowry S."/>
            <person name="Ludeman T."/>
            <person name="Manohar C.F."/>
            <person name="Mark G.A."/>
            <person name="McMurray K.L."/>
            <person name="Meincke L.J."/>
            <person name="Morgan J."/>
            <person name="Moyzis R.K."/>
            <person name="Mundt M.O."/>
            <person name="Munk A.C."/>
            <person name="Nandkeshwar R.D."/>
            <person name="Pitluck S."/>
            <person name="Pollard M."/>
            <person name="Predki P."/>
            <person name="Parson-Quintana B."/>
            <person name="Ramirez L."/>
            <person name="Rash S."/>
            <person name="Retterer J."/>
            <person name="Ricke D.O."/>
            <person name="Robinson D.L."/>
            <person name="Rodriguez A."/>
            <person name="Salamov A."/>
            <person name="Saunders E.H."/>
            <person name="Scott D."/>
            <person name="Shough T."/>
            <person name="Stallings R.L."/>
            <person name="Stalvey M."/>
            <person name="Sutherland R.D."/>
            <person name="Tapia R."/>
            <person name="Tesmer J.G."/>
            <person name="Thayer N."/>
            <person name="Thompson L.S."/>
            <person name="Tice H."/>
            <person name="Torney D.C."/>
            <person name="Tran-Gyamfi M."/>
            <person name="Tsai M."/>
            <person name="Ulanovsky L.E."/>
            <person name="Ustaszewska A."/>
            <person name="Vo N."/>
            <person name="White P.S."/>
            <person name="Williams A.L."/>
            <person name="Wills P.L."/>
            <person name="Wu J.-R."/>
            <person name="Wu K."/>
            <person name="Yang J."/>
            <person name="DeJong P."/>
            <person name="Bruce D."/>
            <person name="Doggett N.A."/>
            <person name="Deaven L."/>
            <person name="Schmutz J."/>
            <person name="Grimwood J."/>
            <person name="Richardson P."/>
            <person name="Rokhsar D.S."/>
            <person name="Eichler E.E."/>
            <person name="Gilna P."/>
            <person name="Lucas S.M."/>
            <person name="Myers R.M."/>
            <person name="Rubin E.M."/>
            <person name="Pennacchio L.A."/>
        </authorList>
    </citation>
    <scope>NUCLEOTIDE SEQUENCE [LARGE SCALE GENOMIC DNA]</scope>
</reference>
<reference key="4">
    <citation type="journal article" date="2004" name="Genome Res.">
        <title>The status, quality, and expansion of the NIH full-length cDNA project: the Mammalian Gene Collection (MGC).</title>
        <authorList>
            <consortium name="The MGC Project Team"/>
        </authorList>
    </citation>
    <scope>NUCLEOTIDE SEQUENCE [LARGE SCALE MRNA] (ISOFORM 2)</scope>
    <scope>NUCLEOTIDE SEQUENCE [LARGE SCALE MRNA] OF 471-862 (ISOFORM 1)</scope>
    <source>
        <tissue>Lymphoma</tissue>
        <tissue>Renal cell carcinoma</tissue>
    </source>
</reference>
<reference key="5">
    <citation type="journal article" date="1999" name="J. Biol. Chem.">
        <title>Identification of a domain of Axin that binds to the serine/threonine protein phosphatase 2A and a self-binding domain.</title>
        <authorList>
            <person name="Hsu W."/>
            <person name="Zeng L."/>
            <person name="Costantini F."/>
        </authorList>
    </citation>
    <scope>INTERACTION WITH GSK3B AND PPP2CA</scope>
    <scope>PHOSPHORYLATION</scope>
    <scope>DEPHOSPHORYLATION</scope>
</reference>
<reference key="6">
    <citation type="journal article" date="2000" name="Nat. Genet.">
        <title>AXIN1 mutations in hepatocellular carcinomas, and growth suppression in cancer cells by virus-mediated transfer of AXIN1.</title>
        <authorList>
            <person name="Satoh S."/>
            <person name="Daigo Y."/>
            <person name="Furukawa Y."/>
            <person name="Kato T."/>
            <person name="Miwa N."/>
            <person name="Nishiwaki T."/>
            <person name="Kawasoe T."/>
            <person name="Ishiguro H."/>
            <person name="Fujita M."/>
            <person name="Tokino T."/>
            <person name="Sasaki Y."/>
            <person name="Imaoka S."/>
            <person name="Murata M."/>
            <person name="Shimano T."/>
            <person name="Yamaoka Y."/>
            <person name="Nakamura Y."/>
        </authorList>
    </citation>
    <scope>DISEASE</scope>
</reference>
<reference key="7">
    <citation type="journal article" date="2001" name="Mol. Cell">
        <title>Low-density lipoprotein receptor-related protein-5 binds to Axin and regulates the canonical Wnt signaling pathway.</title>
        <authorList>
            <person name="Mao J."/>
            <person name="Wang J."/>
            <person name="Liu B."/>
            <person name="Pan W."/>
            <person name="Farr G.H. III"/>
            <person name="Flynn C."/>
            <person name="Yuan H."/>
            <person name="Takada S."/>
            <person name="Kimelman D."/>
            <person name="Li L."/>
            <person name="Wu D."/>
        </authorList>
    </citation>
    <scope>INTERACTION WITH LRP5</scope>
</reference>
<reference key="8">
    <citation type="journal article" date="2002" name="Mol. Cell. Biol.">
        <title>I-mfa domain proteins interact with Axin and affect its regulation of the Wnt and c-Jun N-terminal kinase signaling pathways.</title>
        <authorList>
            <person name="Kusano S."/>
            <person name="Raab-Traub N."/>
        </authorList>
    </citation>
    <scope>INTERACTION WITH MDFI AND MDFIC</scope>
    <scope>FUNCTION</scope>
</reference>
<reference key="9">
    <citation type="journal article" date="2003" name="EMBO J.">
        <title>Regulation of the Wnt signaling pathway by disabled-2 (Dab2).</title>
        <authorList>
            <person name="Howe P.H."/>
        </authorList>
    </citation>
    <scope>INTERACTION WITH DAB2</scope>
</reference>
<reference key="10">
    <citation type="journal article" date="2004" name="J. Biol. Chem.">
        <title>The DIX domain protein coiled-coil-DIX1 inhibits c-Jun N-terminal kinase activation by Axin and dishevelled through distinct mechanisms.</title>
        <authorList>
            <person name="Wong C.K."/>
            <person name="Luo W."/>
            <person name="Deng Y."/>
            <person name="Zou H."/>
            <person name="Ye Z."/>
            <person name="Lin S.-C."/>
        </authorList>
    </citation>
    <scope>INTERACTION WITH DIXDC1; MAP3K1 AND MAP3K4</scope>
</reference>
<reference key="11">
    <citation type="journal article" date="2006" name="Am. J. Hum. Genet.">
        <title>Increased DNA methylation at the AXIN1 gene in a monozygotic twin from a pair discordant for a caudal duplication anomaly.</title>
        <authorList>
            <person name="Oates N.A."/>
            <person name="van Vliet J."/>
            <person name="Duffy D.L."/>
            <person name="Kroes H.Y."/>
            <person name="Martin N.G."/>
            <person name="Boomsma D.I."/>
            <person name="Campbell M."/>
            <person name="Coulthard M.G."/>
            <person name="Whitelaw E."/>
            <person name="Chong S."/>
        </authorList>
    </citation>
    <scope>INVOLVEMENT IN CAUDAL DUPLICATION ANOMALY</scope>
</reference>
<reference key="12">
    <citation type="journal article" date="2006" name="EMBO J.">
        <title>Axin is a scaffold protein in TGF-beta signaling that promotes degradation of Smad7 by Arkadia.</title>
        <authorList>
            <person name="Liu W."/>
            <person name="Rui H."/>
            <person name="Wang J."/>
            <person name="Lin S."/>
            <person name="He Y."/>
            <person name="Chen M."/>
            <person name="Li Q."/>
            <person name="Ye Z."/>
            <person name="Zhang S."/>
            <person name="Chan S.C."/>
            <person name="Chen Y.-G."/>
            <person name="Han J."/>
            <person name="Lin S.-C."/>
        </authorList>
    </citation>
    <scope>INTERACTION WITH SMAD6; SMAD7 AND RNF111</scope>
    <scope>FUNCTION</scope>
    <scope>SUBCELLULAR LOCATION</scope>
</reference>
<reference key="13">
    <citation type="journal article" date="2007" name="Cancer Res.">
        <title>Daxx cooperates with the Axin/HIPK2/p53 complex to induce cell death.</title>
        <authorList>
            <person name="Li Q."/>
            <person name="Wang X."/>
            <person name="Wu X."/>
            <person name="Rui Y."/>
            <person name="Liu W."/>
            <person name="Wang J."/>
            <person name="Wang X."/>
            <person name="Liou Y.C."/>
            <person name="Ye Z."/>
            <person name="Lin S.C."/>
        </authorList>
    </citation>
    <scope>INTERACTION WITH DAXX</scope>
    <scope>IDENTIFICATION AS A COMPONENT OF THE AXIN1-HIPK2-TP53 COMPLEX</scope>
    <scope>SUBCELLULAR LOCATION</scope>
    <scope>FUNCTION</scope>
</reference>
<reference key="14">
    <citation type="journal article" date="2007" name="EMBO J.">
        <title>Protein phosphatase 1 regulates assembly and function of the beta-catenin degradation complex.</title>
        <authorList>
            <person name="Luo W."/>
            <person name="Peterson A."/>
            <person name="Garcia B.A."/>
            <person name="Coombs G."/>
            <person name="Kofahl B."/>
            <person name="Heinrich R."/>
            <person name="Shabanowitz J."/>
            <person name="Hunt D.F."/>
            <person name="Yost H.J."/>
            <person name="Virshup D.M."/>
        </authorList>
    </citation>
    <scope>PHOSPHORYLATION AT SER-75; SER-77; SER-217 AND SER-469</scope>
    <scope>INTERACTION WITH GSK3B AND PPP1CA</scope>
    <scope>IDENTIFICATION BY MASS SPECTROMETRY</scope>
</reference>
<reference key="15">
    <citation type="journal article" date="2008" name="FASEB J.">
        <title>SUMOylation target sites at the C terminus protect Axin from ubiquitination and confer protein stability.</title>
        <authorList>
            <person name="Kim M.J."/>
            <person name="Chia I.V."/>
            <person name="Costantini F."/>
        </authorList>
    </citation>
    <scope>SUMOYLATION</scope>
</reference>
<reference key="16">
    <citation type="journal article" date="2008" name="Proc. Natl. Acad. Sci. U.S.A.">
        <title>A quantitative atlas of mitotic phosphorylation.</title>
        <authorList>
            <person name="Dephoure N."/>
            <person name="Zhou C."/>
            <person name="Villen J."/>
            <person name="Beausoleil S.A."/>
            <person name="Bakalarski C.E."/>
            <person name="Elledge S.J."/>
            <person name="Gygi S.P."/>
        </authorList>
    </citation>
    <scope>IDENTIFICATION BY MASS SPECTROMETRY [LARGE SCALE ANALYSIS]</scope>
    <source>
        <tissue>Cervix carcinoma</tissue>
    </source>
</reference>
<reference key="17">
    <citation type="journal article" date="2009" name="Nature">
        <title>Tankyrase inhibition stabilizes axin and antagonizes Wnt signalling.</title>
        <authorList>
            <person name="Huang S.M."/>
            <person name="Mishina Y.M."/>
            <person name="Liu S."/>
            <person name="Cheung A."/>
            <person name="Stegmeier F."/>
            <person name="Michaud G.A."/>
            <person name="Charlat O."/>
            <person name="Wiellette E."/>
            <person name="Zhang Y."/>
            <person name="Wiessner S."/>
            <person name="Hild M."/>
            <person name="Shi X."/>
            <person name="Wilson C.J."/>
            <person name="Mickanin C."/>
            <person name="Myer V."/>
            <person name="Fazal A."/>
            <person name="Tomlinson R."/>
            <person name="Serluca F."/>
            <person name="Shao W."/>
            <person name="Cheng H."/>
            <person name="Shultz M."/>
            <person name="Rau C."/>
            <person name="Schirle M."/>
            <person name="Schlegl J."/>
            <person name="Ghidelli S."/>
            <person name="Fawell S."/>
            <person name="Lu C."/>
            <person name="Curtis D."/>
            <person name="Kirschner M.W."/>
            <person name="Lengauer C."/>
            <person name="Finan P.M."/>
            <person name="Tallarico J.A."/>
            <person name="Bouwmeester T."/>
            <person name="Porter J.A."/>
            <person name="Bauer A."/>
            <person name="Cong F."/>
        </authorList>
    </citation>
    <scope>ADP-RIBOSYLATION</scope>
    <scope>UBIQUITINATION</scope>
    <scope>DOMAIN TANKYRASE-BINDING MOTIF</scope>
    <scope>INTERACTION WITH TNKS AND TNKS2</scope>
</reference>
<reference key="18">
    <citation type="journal article" date="2011" name="Mol. Cell. Biol.">
        <title>The Ubiquitin specific protease USP34 regulates Axin stability and Wnt/beta-catenin signaling.</title>
        <authorList>
            <person name="Lui T.T."/>
            <person name="Lacroix C."/>
            <person name="Ahmed S.M."/>
            <person name="Goldenberg S.J."/>
            <person name="Leach C.A."/>
            <person name="Daulat A.M."/>
            <person name="Angers S."/>
        </authorList>
    </citation>
    <scope>UBIQUITINATION</scope>
    <scope>DEUBIQUITINATION BY USP34</scope>
    <scope>SUBCELLULAR LOCATION</scope>
</reference>
<reference key="19">
    <citation type="journal article" date="2011" name="Nat. Cell Biol.">
        <title>RNF146 is a poly(ADP-ribose)-directed E3 ligase that regulates axin degradation and Wnt signalling.</title>
        <authorList>
            <person name="Zhang Y."/>
            <person name="Liu S."/>
            <person name="Mickanin C."/>
            <person name="Feng Y."/>
            <person name="Charlat O."/>
            <person name="Michaud G.A."/>
            <person name="Schirle M."/>
            <person name="Shi X."/>
            <person name="Hild M."/>
            <person name="Bauer A."/>
            <person name="Myer V.E."/>
            <person name="Finan P.M."/>
            <person name="Porter J.A."/>
            <person name="Huang S.M."/>
            <person name="Cong F."/>
        </authorList>
    </citation>
    <scope>ADP-RIBOSYLATION</scope>
    <scope>UBIQUITINATION</scope>
    <scope>INTERACTION WITH RNF146; TNKS AND TNKS2</scope>
</reference>
<reference key="20">
    <citation type="journal article" date="2011" name="PLoS ONE">
        <title>Ubiquitin ligase RNF146 regulates tankyrase and Axin to promote Wnt signaling.</title>
        <authorList>
            <person name="Callow M.G."/>
            <person name="Tran H."/>
            <person name="Phu L."/>
            <person name="Lau T."/>
            <person name="Lee J."/>
            <person name="Sandoval W.N."/>
            <person name="Liu P.S."/>
            <person name="Bheddah S."/>
            <person name="Tao J."/>
            <person name="Lill J.R."/>
            <person name="Hongo J.A."/>
            <person name="Davis D."/>
            <person name="Kirkpatrick D.S."/>
            <person name="Polakis P."/>
            <person name="Costa M."/>
        </authorList>
    </citation>
    <scope>INTERACTION WITH TNKS</scope>
    <scope>UBIQUITINATION</scope>
</reference>
<reference key="21">
    <citation type="journal article" date="2013" name="J. Proteome Res.">
        <title>Toward a comprehensive characterization of a human cancer cell phosphoproteome.</title>
        <authorList>
            <person name="Zhou H."/>
            <person name="Di Palma S."/>
            <person name="Preisinger C."/>
            <person name="Peng M."/>
            <person name="Polat A.N."/>
            <person name="Heck A.J."/>
            <person name="Mohammed S."/>
        </authorList>
    </citation>
    <scope>PHOSPHORYLATION [LARGE SCALE ANALYSIS] AT SER-77; SER-486; SER-511 AND SER-581</scope>
    <scope>IDENTIFICATION BY MASS SPECTROMETRY [LARGE SCALE ANALYSIS]</scope>
    <source>
        <tissue>Cervix carcinoma</tissue>
        <tissue>Erythroleukemia</tissue>
    </source>
</reference>
<reference key="22">
    <citation type="journal article" date="2014" name="J. Proteomics">
        <title>An enzyme assisted RP-RPLC approach for in-depth analysis of human liver phosphoproteome.</title>
        <authorList>
            <person name="Bian Y."/>
            <person name="Song C."/>
            <person name="Cheng K."/>
            <person name="Dong M."/>
            <person name="Wang F."/>
            <person name="Huang J."/>
            <person name="Sun D."/>
            <person name="Wang L."/>
            <person name="Ye M."/>
            <person name="Zou H."/>
        </authorList>
    </citation>
    <scope>IDENTIFICATION BY MASS SPECTROMETRY [LARGE SCALE ANALYSIS]</scope>
    <source>
        <tissue>Liver</tissue>
    </source>
</reference>
<reference key="23">
    <citation type="journal article" date="2016" name="FEBS Lett.">
        <title>WDR26 is a new partner of Axin1 in the canonical Wnt signaling pathway.</title>
        <authorList>
            <person name="Goto T."/>
            <person name="Matsuzawa J."/>
            <person name="Iemura S."/>
            <person name="Natsume T."/>
            <person name="Shibuya H."/>
        </authorList>
    </citation>
    <scope>INTERACTION WITH WDR26</scope>
    <scope>FUNCTION</scope>
</reference>
<reference key="24">
    <citation type="journal article" date="2017" name="Cell Res.">
        <title>Twa1/Gid8 is a beta-catenin nuclear retention factor in Wnt signaling and colorectal tumorigenesis.</title>
        <authorList>
            <person name="Lu Y."/>
            <person name="Xie S."/>
            <person name="Zhang W."/>
            <person name="Zhang C."/>
            <person name="Gao C."/>
            <person name="Sun Q."/>
            <person name="Cai Y."/>
            <person name="Xu Z."/>
            <person name="Xiao M."/>
            <person name="Xu Y."/>
            <person name="Huang X."/>
            <person name="Wu X."/>
            <person name="Liu W."/>
            <person name="Wang F."/>
            <person name="Kang Y."/>
            <person name="Zhou T."/>
        </authorList>
    </citation>
    <scope>INTERACTION WITH GID8; GSK3B AND CTNNB1</scope>
</reference>
<reference key="25">
    <citation type="journal article" date="2017" name="Genes Dev.">
        <title>The SIAH E3 ubiquitin ligases promote Wnt/beta-catenin signaling through mediating Wnt-induced Axin degradation.</title>
        <authorList>
            <person name="Ji L."/>
            <person name="Jiang B."/>
            <person name="Jiang X."/>
            <person name="Charlat O."/>
            <person name="Chen A."/>
            <person name="Mickanin C."/>
            <person name="Bauer A."/>
            <person name="Xu W."/>
            <person name="Yan X."/>
            <person name="Cong F."/>
        </authorList>
    </citation>
    <scope>FUNCTION</scope>
    <scope>INTERACTION WITH GSK3B; SIAH1 AND SIAH2</scope>
    <scope>UBIQUITINATION</scope>
    <scope>MUTAGENESIS OF VAL-383 AND PRO-385</scope>
</reference>
<reference key="26">
    <citation type="journal article" date="2000" name="EMBO J.">
        <title>Structural basis of the axin-adenomatous polyposis coli interaction.</title>
        <authorList>
            <person name="Spink K.E."/>
            <person name="Polakis P."/>
            <person name="Weis W.I."/>
        </authorList>
    </citation>
    <scope>X-RAY CRYSTALLOGRAPHY (1.57 ANGSTROMS) OF 74-220 IN COMPLEX WITH APC</scope>
</reference>
<reference key="27">
    <citation type="journal article" date="2003" name="EMBO J.">
        <title>Structural basis for recruitment of glycogen synthase kinase 3beta to the axin-APC scaffold complex.</title>
        <authorList>
            <person name="Dajani R."/>
            <person name="Fraser E."/>
            <person name="Roe S.M."/>
            <person name="Yeo M."/>
            <person name="Good V.M."/>
            <person name="Thompson V."/>
            <person name="Dale T.C."/>
            <person name="Pearl L.H."/>
        </authorList>
    </citation>
    <scope>X-RAY CRYSTALLOGRAPHY (2.4 ANGSTROMS) OF 383-400 IN COMPLEX WITH GSK3B</scope>
</reference>
<reference key="28">
    <citation type="journal article" date="2002" name="Oncogene">
        <title>Mutational spectrum of beta-catenin, AXIN1, and AXIN2 in hepatocellular carcinomas and hepatoblastomas.</title>
        <authorList>
            <person name="Taniguchi K."/>
            <person name="Roberts L.R."/>
            <person name="Aderca I.N."/>
            <person name="Dong X."/>
            <person name="Qian C."/>
            <person name="Murphy L.M."/>
            <person name="Nagorney D.M."/>
            <person name="Burgart L.J."/>
            <person name="Roche P.C."/>
            <person name="Smith D.I."/>
            <person name="Ross J.A."/>
            <person name="Liu W."/>
        </authorList>
    </citation>
    <scope>INVOLVEMENT IN HCC</scope>
    <scope>VARIANTS HCC ARG-106; LEU-345 AND SER-425</scope>
    <scope>VARIANTS SER-650 AND GLN-841</scope>
</reference>
<reference key="29">
    <citation type="journal article" date="2023" name="Am. J. Hum. Genet.">
        <title>AXIN1 bi-allelic variants disrupting the C-terminal DIX domain cause craniometadiaphyseal osteosclerosis with hip dysplasia.</title>
        <authorList>
            <person name="Terhal P."/>
            <person name="Venhuizen A.J."/>
            <person name="Lessel D."/>
            <person name="Tan W.H."/>
            <person name="Alswaid A."/>
            <person name="Gruen R."/>
            <person name="Alzaidan H.I."/>
            <person name="von Kroge S."/>
            <person name="Ragab N."/>
            <person name="Hempel M."/>
            <person name="Kubisch C."/>
            <person name="Novais E."/>
            <person name="Cristobal A."/>
            <person name="Tripolszki K."/>
            <person name="Bauer P."/>
            <person name="Fischer-Zirnsak B."/>
            <person name="Nievelstein R.A.J."/>
            <person name="van Dijk A."/>
            <person name="Nikkels P."/>
            <person name="Oheim R."/>
            <person name="Hahn H."/>
            <person name="Bertoli-Avella A."/>
            <person name="Maurice M.M."/>
            <person name="Kornak U."/>
        </authorList>
    </citation>
    <scope>VARIANTS CMDOH 723-ARG--ASP-862 DEL AND 841-ARG--ASP-862 DEL</scope>
    <scope>CHARACTERIZATION OF VARIANT CMDOH 723-ARG--ASP-862 DEL</scope>
    <scope>INVOLVEMENT IN CMDOH</scope>
</reference>
<protein>
    <recommendedName>
        <fullName>Axin-1</fullName>
    </recommendedName>
    <alternativeName>
        <fullName>Axis inhibition protein 1</fullName>
        <shortName>hAxin</shortName>
    </alternativeName>
</protein>
<gene>
    <name type="primary">AXIN1</name>
    <name type="synonym">AXIN</name>
</gene>
<sequence>MNIQEQGFPLDLGASFTEDAPRPPVPGEEGELVSTDPRPASYSFCSGKGVGIKGETSTATPRRSDLDLGYEPEGSASPTPPYLKWAESLHSLLDDQDGISLFRTFLKQEGCADLLDFWFACTGFRKLEPCDSNEEKRLKLARAIYRKYILDNNGIVSRQTKPATKSFIKGCIMKQLIDPAMFDQAQTEIQATMEENTYPSFLKSDIYLEYTRTGSESPKVCSDQSSGSGTGKGISGYLPTLNEDEEWKCDQDMDEDDGRDAAPPGRLPQKLLLETAAPRVSSSRRYSEGREFRYGSWREPVNPYYVNAGYALAPATSANDSEQQSLSSDADTLSLTDSSVDGIPPYRIRKQHRREMQESVQVNGRVPLPHIPRTYRVPKEVRVEPQKFAEELIHRLEAVQRTREAEEKLEERLKRVRMEEEGEDGDPSSGPPGPCHKLPPAPAWHHFPPRCVDMGCAGLRDAHEENPESILDEHVQRVLRTPGRQSPGPGHRSPDSGHVAKMPVALGGAASGHGKHVPKSGAKLDAAGLHHHRHVHHHVHHSTARPKEQVEAEATRRAQSSFAWGLEPHSHGARSRGYSESVGAAPNASDGLAHSGKVGVACKRNAKKAESGKSASTEVPGASEDAEKNQKIMQWIIEGEKEISRHRRTGHGSSGTRKPQPHENSRPLSLEHPWAGPQLRTSVQPSHLFIQDPTMPPHPAPNPLTQLEEARRRLEEEEKRASRAPSKQRYVQEVMRRGRACVRPACAPVLHVVPAVSDMELSETETRSQRKVGGGSAQPCDSIVVAYYFCGEPIPYRTLVRGRAVTLGQFKELLTKKGSYRYYFKKVSDEFDCGVVFEEVREDEAVLPVFEEKIIGKVEKVD</sequence>
<proteinExistence type="evidence at protein level"/>
<evidence type="ECO:0000250" key="1"/>
<evidence type="ECO:0000250" key="2">
    <source>
        <dbReference type="UniProtKB" id="O35625"/>
    </source>
</evidence>
<evidence type="ECO:0000250" key="3">
    <source>
        <dbReference type="UniProtKB" id="O70239"/>
    </source>
</evidence>
<evidence type="ECO:0000255" key="4">
    <source>
        <dbReference type="PROSITE-ProRule" id="PRU00069"/>
    </source>
</evidence>
<evidence type="ECO:0000255" key="5">
    <source>
        <dbReference type="PROSITE-ProRule" id="PRU00171"/>
    </source>
</evidence>
<evidence type="ECO:0000256" key="6">
    <source>
        <dbReference type="SAM" id="MobiDB-lite"/>
    </source>
</evidence>
<evidence type="ECO:0000269" key="7">
    <source>
    </source>
</evidence>
<evidence type="ECO:0000269" key="8">
    <source>
    </source>
</evidence>
<evidence type="ECO:0000269" key="9">
    <source>
    </source>
</evidence>
<evidence type="ECO:0000269" key="10">
    <source>
    </source>
</evidence>
<evidence type="ECO:0000269" key="11">
    <source>
    </source>
</evidence>
<evidence type="ECO:0000269" key="12">
    <source>
    </source>
</evidence>
<evidence type="ECO:0000269" key="13">
    <source>
    </source>
</evidence>
<evidence type="ECO:0000269" key="14">
    <source>
    </source>
</evidence>
<evidence type="ECO:0000269" key="15">
    <source>
    </source>
</evidence>
<evidence type="ECO:0000269" key="16">
    <source>
    </source>
</evidence>
<evidence type="ECO:0000269" key="17">
    <source>
    </source>
</evidence>
<evidence type="ECO:0000269" key="18">
    <source>
    </source>
</evidence>
<evidence type="ECO:0000269" key="19">
    <source>
    </source>
</evidence>
<evidence type="ECO:0000269" key="20">
    <source>
    </source>
</evidence>
<evidence type="ECO:0000269" key="21">
    <source>
    </source>
</evidence>
<evidence type="ECO:0000269" key="22">
    <source>
    </source>
</evidence>
<evidence type="ECO:0000269" key="23">
    <source>
    </source>
</evidence>
<evidence type="ECO:0000269" key="24">
    <source>
    </source>
</evidence>
<evidence type="ECO:0000269" key="25">
    <source>
    </source>
</evidence>
<evidence type="ECO:0000269" key="26">
    <source>
    </source>
</evidence>
<evidence type="ECO:0000269" key="27">
    <source>
    </source>
</evidence>
<evidence type="ECO:0000303" key="28">
    <source>
    </source>
</evidence>
<evidence type="ECO:0000305" key="29"/>
<evidence type="ECO:0007744" key="30">
    <source>
    </source>
</evidence>
<evidence type="ECO:0007829" key="31">
    <source>
        <dbReference type="PDB" id="1DK8"/>
    </source>
</evidence>
<evidence type="ECO:0007829" key="32">
    <source>
        <dbReference type="PDB" id="1EMU"/>
    </source>
</evidence>
<evidence type="ECO:0007829" key="33">
    <source>
        <dbReference type="PDB" id="5WZZ"/>
    </source>
</evidence>
<evidence type="ECO:0007829" key="34">
    <source>
        <dbReference type="PDB" id="6JCK"/>
    </source>
</evidence>
<evidence type="ECO:0007829" key="35">
    <source>
        <dbReference type="PDB" id="7SXJ"/>
    </source>
</evidence>
<evidence type="ECO:0007829" key="36">
    <source>
        <dbReference type="PDB" id="8RU3"/>
    </source>
</evidence>
<name>AXIN1_HUMAN</name>
<accession>O15169</accession>
<accession>Q4TT26</accession>
<accession>Q4TT27</accession>
<accession>Q86YA7</accession>
<accession>Q8WVW6</accession>
<accession>Q96S28</accession>
<dbReference type="EMBL" id="AF009674">
    <property type="protein sequence ID" value="AAC51624.1"/>
    <property type="status" value="ALT_INIT"/>
    <property type="molecule type" value="mRNA"/>
</dbReference>
<dbReference type="EMBL" id="AE006463">
    <property type="protein sequence ID" value="AAK61224.1"/>
    <property type="molecule type" value="Genomic_DNA"/>
</dbReference>
<dbReference type="EMBL" id="Z69667">
    <property type="protein sequence ID" value="CAI95589.2"/>
    <property type="molecule type" value="Genomic_DNA"/>
</dbReference>
<dbReference type="EMBL" id="AC005202">
    <property type="protein sequence ID" value="CAI95589.2"/>
    <property type="status" value="JOINED"/>
    <property type="molecule type" value="Genomic_DNA"/>
</dbReference>
<dbReference type="EMBL" id="Z99754">
    <property type="protein sequence ID" value="CAI95589.2"/>
    <property type="status" value="JOINED"/>
    <property type="molecule type" value="Genomic_DNA"/>
</dbReference>
<dbReference type="EMBL" id="Z69667">
    <property type="protein sequence ID" value="CAI95590.2"/>
    <property type="molecule type" value="Genomic_DNA"/>
</dbReference>
<dbReference type="EMBL" id="AC005202">
    <property type="protein sequence ID" value="CAI95590.2"/>
    <property type="status" value="JOINED"/>
    <property type="molecule type" value="Genomic_DNA"/>
</dbReference>
<dbReference type="EMBL" id="Z99754">
    <property type="protein sequence ID" value="CAI95590.2"/>
    <property type="status" value="JOINED"/>
    <property type="molecule type" value="Genomic_DNA"/>
</dbReference>
<dbReference type="EMBL" id="Z99754">
    <property type="protein sequence ID" value="CAI95600.2"/>
    <property type="molecule type" value="Genomic_DNA"/>
</dbReference>
<dbReference type="EMBL" id="AC005202">
    <property type="protein sequence ID" value="CAI95600.2"/>
    <property type="status" value="JOINED"/>
    <property type="molecule type" value="Genomic_DNA"/>
</dbReference>
<dbReference type="EMBL" id="Z69667">
    <property type="protein sequence ID" value="CAI95600.2"/>
    <property type="status" value="JOINED"/>
    <property type="molecule type" value="Genomic_DNA"/>
</dbReference>
<dbReference type="EMBL" id="Z99754">
    <property type="protein sequence ID" value="CAI95601.2"/>
    <property type="molecule type" value="Genomic_DNA"/>
</dbReference>
<dbReference type="EMBL" id="AC005202">
    <property type="protein sequence ID" value="CAI95601.2"/>
    <property type="status" value="JOINED"/>
    <property type="molecule type" value="Genomic_DNA"/>
</dbReference>
<dbReference type="EMBL" id="Z69667">
    <property type="protein sequence ID" value="CAI95601.2"/>
    <property type="status" value="JOINED"/>
    <property type="molecule type" value="Genomic_DNA"/>
</dbReference>
<dbReference type="EMBL" id="BC017447">
    <property type="protein sequence ID" value="AAH17447.1"/>
    <property type="molecule type" value="mRNA"/>
</dbReference>
<dbReference type="EMBL" id="BC044648">
    <property type="protein sequence ID" value="AAH44648.1"/>
    <property type="molecule type" value="mRNA"/>
</dbReference>
<dbReference type="CCDS" id="CCDS10405.1">
    <molecule id="O15169-1"/>
</dbReference>
<dbReference type="CCDS" id="CCDS10406.1">
    <molecule id="O15169-2"/>
</dbReference>
<dbReference type="RefSeq" id="NP_003493.1">
    <molecule id="O15169-1"/>
    <property type="nucleotide sequence ID" value="NM_003502.4"/>
</dbReference>
<dbReference type="RefSeq" id="NP_851393.1">
    <molecule id="O15169-2"/>
    <property type="nucleotide sequence ID" value="NM_181050.3"/>
</dbReference>
<dbReference type="PDB" id="1DK8">
    <property type="method" value="X-ray"/>
    <property type="resolution" value="1.57 A"/>
    <property type="chains" value="A=74-220"/>
</dbReference>
<dbReference type="PDB" id="1EMU">
    <property type="method" value="X-ray"/>
    <property type="resolution" value="1.90 A"/>
    <property type="chains" value="A=80-211"/>
</dbReference>
<dbReference type="PDB" id="1O9U">
    <property type="method" value="X-ray"/>
    <property type="resolution" value="2.40 A"/>
    <property type="chains" value="B=383-400"/>
</dbReference>
<dbReference type="PDB" id="3ZDI">
    <property type="method" value="X-ray"/>
    <property type="resolution" value="2.64 A"/>
    <property type="chains" value="B=383-400"/>
</dbReference>
<dbReference type="PDB" id="4B7T">
    <property type="method" value="X-ray"/>
    <property type="resolution" value="2.77 A"/>
    <property type="chains" value="B=383-400"/>
</dbReference>
<dbReference type="PDB" id="4NM0">
    <property type="method" value="X-ray"/>
    <property type="resolution" value="2.50 A"/>
    <property type="chains" value="B=383-402"/>
</dbReference>
<dbReference type="PDB" id="4NM3">
    <property type="method" value="X-ray"/>
    <property type="resolution" value="2.10 A"/>
    <property type="chains" value="B=383-402"/>
</dbReference>
<dbReference type="PDB" id="4NM5">
    <property type="method" value="X-ray"/>
    <property type="resolution" value="2.30 A"/>
    <property type="chains" value="B=383-402"/>
</dbReference>
<dbReference type="PDB" id="4NM7">
    <property type="method" value="X-ray"/>
    <property type="resolution" value="2.30 A"/>
    <property type="chains" value="B=383-402"/>
</dbReference>
<dbReference type="PDB" id="4NU1">
    <property type="method" value="X-ray"/>
    <property type="resolution" value="2.50 A"/>
    <property type="chains" value="B=383-402"/>
</dbReference>
<dbReference type="PDB" id="5WZZ">
    <property type="method" value="X-ray"/>
    <property type="resolution" value="2.10 A"/>
    <property type="chains" value="E/F/G/H=375-394"/>
</dbReference>
<dbReference type="PDB" id="6JCK">
    <property type="method" value="X-ray"/>
    <property type="resolution" value="3.09 A"/>
    <property type="chains" value="A=781-862"/>
</dbReference>
<dbReference type="PDB" id="7SXF">
    <property type="method" value="X-ray"/>
    <property type="resolution" value="1.94 A"/>
    <property type="chains" value="B=385-399"/>
</dbReference>
<dbReference type="PDB" id="7SXG">
    <property type="method" value="X-ray"/>
    <property type="resolution" value="2.40 A"/>
    <property type="chains" value="B=385-400"/>
</dbReference>
<dbReference type="PDB" id="7SXH">
    <property type="method" value="X-ray"/>
    <property type="resolution" value="2.09 A"/>
    <property type="chains" value="B=385-400"/>
</dbReference>
<dbReference type="PDB" id="7SXJ">
    <property type="method" value="X-ray"/>
    <property type="resolution" value="1.85 A"/>
    <property type="chains" value="B=384-400"/>
</dbReference>
<dbReference type="PDB" id="7Y1P">
    <property type="method" value="X-ray"/>
    <property type="resolution" value="2.60 A"/>
    <property type="chains" value="A/B/C/D=74-220"/>
</dbReference>
<dbReference type="PDB" id="8RU3">
    <property type="method" value="X-ray"/>
    <property type="resolution" value="2.00 A"/>
    <property type="chains" value="P=468-479"/>
</dbReference>
<dbReference type="PDB" id="8RU4">
    <property type="method" value="X-ray"/>
    <property type="resolution" value="2.13 A"/>
    <property type="chains" value="C=469-479"/>
</dbReference>
<dbReference type="PDB" id="8VMG">
    <property type="method" value="X-ray"/>
    <property type="resolution" value="2.45 A"/>
    <property type="chains" value="C/D=383-435"/>
</dbReference>
<dbReference type="PDBsum" id="1DK8"/>
<dbReference type="PDBsum" id="1EMU"/>
<dbReference type="PDBsum" id="1O9U"/>
<dbReference type="PDBsum" id="3ZDI"/>
<dbReference type="PDBsum" id="4B7T"/>
<dbReference type="PDBsum" id="4NM0"/>
<dbReference type="PDBsum" id="4NM3"/>
<dbReference type="PDBsum" id="4NM5"/>
<dbReference type="PDBsum" id="4NM7"/>
<dbReference type="PDBsum" id="4NU1"/>
<dbReference type="PDBsum" id="5WZZ"/>
<dbReference type="PDBsum" id="6JCK"/>
<dbReference type="PDBsum" id="7SXF"/>
<dbReference type="PDBsum" id="7SXG"/>
<dbReference type="PDBsum" id="7SXH"/>
<dbReference type="PDBsum" id="7SXJ"/>
<dbReference type="PDBsum" id="7Y1P"/>
<dbReference type="PDBsum" id="8RU3"/>
<dbReference type="PDBsum" id="8RU4"/>
<dbReference type="PDBsum" id="8VMG"/>
<dbReference type="SMR" id="O15169"/>
<dbReference type="BioGRID" id="113909">
    <property type="interactions" value="153"/>
</dbReference>
<dbReference type="ComplexPortal" id="CPX-107">
    <property type="entry name" value="Beta-catenin destruction core complex, APC-AXIN1-GSK3A variant"/>
</dbReference>
<dbReference type="ComplexPortal" id="CPX-109">
    <property type="entry name" value="Beta-catenin destruction core complex, APC-AXIN1-GSK3B variant"/>
</dbReference>
<dbReference type="ComplexPortal" id="CPX-442">
    <property type="entry name" value="Beta-catenin destruction core complex, APC2-AXIN1-GSK3A variant"/>
</dbReference>
<dbReference type="ComplexPortal" id="CPX-99">
    <property type="entry name" value="Beta-catenin destruction core complex, APC2-AXIN1-GSK3B variant"/>
</dbReference>
<dbReference type="CORUM" id="O15169"/>
<dbReference type="DIP" id="DIP-34630N"/>
<dbReference type="FunCoup" id="O15169">
    <property type="interactions" value="2413"/>
</dbReference>
<dbReference type="IntAct" id="O15169">
    <property type="interactions" value="134"/>
</dbReference>
<dbReference type="MINT" id="O15169"/>
<dbReference type="STRING" id="9606.ENSP00000262320"/>
<dbReference type="ChEMBL" id="CHEMBL1255127"/>
<dbReference type="DrugBank" id="DB04447">
    <property type="generic name" value="1,4-Dithiothreitol"/>
</dbReference>
<dbReference type="GlyGen" id="O15169">
    <property type="glycosylation" value="1 site"/>
</dbReference>
<dbReference type="iPTMnet" id="O15169"/>
<dbReference type="PhosphoSitePlus" id="O15169"/>
<dbReference type="BioMuta" id="AXIN1"/>
<dbReference type="jPOST" id="O15169"/>
<dbReference type="MassIVE" id="O15169"/>
<dbReference type="PaxDb" id="9606-ENSP00000262320"/>
<dbReference type="PeptideAtlas" id="O15169"/>
<dbReference type="ProteomicsDB" id="48492">
    <molecule id="O15169-1"/>
</dbReference>
<dbReference type="ProteomicsDB" id="48493">
    <molecule id="O15169-2"/>
</dbReference>
<dbReference type="Pumba" id="O15169"/>
<dbReference type="Antibodypedia" id="22635">
    <property type="antibodies" value="542 antibodies from 40 providers"/>
</dbReference>
<dbReference type="DNASU" id="8312"/>
<dbReference type="Ensembl" id="ENST00000262320.8">
    <molecule id="O15169-1"/>
    <property type="protein sequence ID" value="ENSP00000262320.3"/>
    <property type="gene ID" value="ENSG00000103126.15"/>
</dbReference>
<dbReference type="Ensembl" id="ENST00000354866.7">
    <molecule id="O15169-2"/>
    <property type="protein sequence ID" value="ENSP00000346935.3"/>
    <property type="gene ID" value="ENSG00000103126.15"/>
</dbReference>
<dbReference type="GeneID" id="8312"/>
<dbReference type="KEGG" id="hsa:8312"/>
<dbReference type="MANE-Select" id="ENST00000262320.8">
    <property type="protein sequence ID" value="ENSP00000262320.3"/>
    <property type="RefSeq nucleotide sequence ID" value="NM_003502.4"/>
    <property type="RefSeq protein sequence ID" value="NP_003493.1"/>
</dbReference>
<dbReference type="UCSC" id="uc002cgp.3">
    <molecule id="O15169-1"/>
    <property type="organism name" value="human"/>
</dbReference>
<dbReference type="AGR" id="HGNC:903"/>
<dbReference type="CTD" id="8312"/>
<dbReference type="DisGeNET" id="8312"/>
<dbReference type="GeneCards" id="AXIN1"/>
<dbReference type="HGNC" id="HGNC:903">
    <property type="gene designation" value="AXIN1"/>
</dbReference>
<dbReference type="HPA" id="ENSG00000103126">
    <property type="expression patterns" value="Low tissue specificity"/>
</dbReference>
<dbReference type="MalaCards" id="AXIN1"/>
<dbReference type="MIM" id="114550">
    <property type="type" value="phenotype"/>
</dbReference>
<dbReference type="MIM" id="603816">
    <property type="type" value="gene"/>
</dbReference>
<dbReference type="MIM" id="607864">
    <property type="type" value="phenotype"/>
</dbReference>
<dbReference type="MIM" id="620558">
    <property type="type" value="phenotype"/>
</dbReference>
<dbReference type="neXtProt" id="NX_O15169"/>
<dbReference type="OpenTargets" id="ENSG00000103126"/>
<dbReference type="Orphanet" id="210159">
    <property type="disease" value="Adult hepatocellular carcinoma"/>
</dbReference>
<dbReference type="PharmGKB" id="PA25195"/>
<dbReference type="VEuPathDB" id="HostDB:ENSG00000103126"/>
<dbReference type="eggNOG" id="KOG3589">
    <property type="taxonomic scope" value="Eukaryota"/>
</dbReference>
<dbReference type="GeneTree" id="ENSGT00940000156947"/>
<dbReference type="HOGENOM" id="CLU_016422_0_0_1"/>
<dbReference type="InParanoid" id="O15169"/>
<dbReference type="OMA" id="YVYTAST"/>
<dbReference type="OrthoDB" id="10007451at2759"/>
<dbReference type="PAN-GO" id="O15169">
    <property type="GO annotations" value="13 GO annotations based on evolutionary models"/>
</dbReference>
<dbReference type="PhylomeDB" id="O15169"/>
<dbReference type="TreeFam" id="TF315454"/>
<dbReference type="PathwayCommons" id="O15169"/>
<dbReference type="Reactome" id="R-HSA-195253">
    <property type="pathway name" value="Degradation of beta-catenin by the destruction complex"/>
</dbReference>
<dbReference type="Reactome" id="R-HSA-196299">
    <property type="pathway name" value="Beta-catenin phosphorylation cascade"/>
</dbReference>
<dbReference type="Reactome" id="R-HSA-201681">
    <property type="pathway name" value="TCF dependent signaling in response to WNT"/>
</dbReference>
<dbReference type="Reactome" id="R-HSA-4641257">
    <property type="pathway name" value="Degradation of AXIN"/>
</dbReference>
<dbReference type="Reactome" id="R-HSA-4641262">
    <property type="pathway name" value="Disassembly of the destruction complex and recruitment of AXIN to the membrane"/>
</dbReference>
<dbReference type="Reactome" id="R-HSA-5339716">
    <property type="pathway name" value="Signaling by GSK3beta mutants"/>
</dbReference>
<dbReference type="Reactome" id="R-HSA-5358747">
    <property type="pathway name" value="CTNNB1 S33 mutants aren't phosphorylated"/>
</dbReference>
<dbReference type="Reactome" id="R-HSA-5358749">
    <property type="pathway name" value="CTNNB1 S37 mutants aren't phosphorylated"/>
</dbReference>
<dbReference type="Reactome" id="R-HSA-5358751">
    <property type="pathway name" value="CTNNB1 S45 mutants aren't phosphorylated"/>
</dbReference>
<dbReference type="Reactome" id="R-HSA-5358752">
    <property type="pathway name" value="CTNNB1 T41 mutants aren't phosphorylated"/>
</dbReference>
<dbReference type="Reactome" id="R-HSA-5467337">
    <property type="pathway name" value="APC truncation mutants have impaired AXIN binding"/>
</dbReference>
<dbReference type="Reactome" id="R-HSA-5467340">
    <property type="pathway name" value="AXIN missense mutants destabilize the destruction complex"/>
</dbReference>
<dbReference type="Reactome" id="R-HSA-5467348">
    <property type="pathway name" value="Truncations of AMER1 destabilize the destruction complex"/>
</dbReference>
<dbReference type="Reactome" id="R-HSA-5689880">
    <property type="pathway name" value="Ub-specific processing proteases"/>
</dbReference>
<dbReference type="Reactome" id="R-HSA-8931987">
    <property type="pathway name" value="RUNX1 regulates estrogen receptor mediated transcription"/>
</dbReference>
<dbReference type="Reactome" id="R-HSA-8939256">
    <property type="pathway name" value="RUNX1 regulates transcription of genes involved in WNT signaling"/>
</dbReference>
<dbReference type="Reactome" id="R-HSA-9018519">
    <property type="pathway name" value="Estrogen-dependent gene expression"/>
</dbReference>
<dbReference type="SignaLink" id="O15169"/>
<dbReference type="SIGNOR" id="O15169"/>
<dbReference type="BioGRID-ORCS" id="8312">
    <property type="hits" value="42 hits in 1179 CRISPR screens"/>
</dbReference>
<dbReference type="CD-CODE" id="D8D47D1F">
    <property type="entry name" value="Synthetic Condensate 000297"/>
</dbReference>
<dbReference type="ChiTaRS" id="AXIN1">
    <property type="organism name" value="human"/>
</dbReference>
<dbReference type="EvolutionaryTrace" id="O15169"/>
<dbReference type="GeneWiki" id="AXIN1"/>
<dbReference type="GenomeRNAi" id="8312"/>
<dbReference type="Pharos" id="O15169">
    <property type="development level" value="Tbio"/>
</dbReference>
<dbReference type="PRO" id="PR:O15169"/>
<dbReference type="Proteomes" id="UP000005640">
    <property type="component" value="Chromosome 16"/>
</dbReference>
<dbReference type="RNAct" id="O15169">
    <property type="molecule type" value="protein"/>
</dbReference>
<dbReference type="Bgee" id="ENSG00000103126">
    <property type="expression patterns" value="Expressed in granulocyte and 102 other cell types or tissues"/>
</dbReference>
<dbReference type="ExpressionAtlas" id="O15169">
    <property type="expression patterns" value="baseline and differential"/>
</dbReference>
<dbReference type="GO" id="GO:0030877">
    <property type="term" value="C:beta-catenin destruction complex"/>
    <property type="evidence" value="ECO:0000314"/>
    <property type="project" value="UniProtKB"/>
</dbReference>
<dbReference type="GO" id="GO:0005938">
    <property type="term" value="C:cell cortex"/>
    <property type="evidence" value="ECO:0007669"/>
    <property type="project" value="Ensembl"/>
</dbReference>
<dbReference type="GO" id="GO:0071944">
    <property type="term" value="C:cell periphery"/>
    <property type="evidence" value="ECO:0000314"/>
    <property type="project" value="BHF-UCL"/>
</dbReference>
<dbReference type="GO" id="GO:0005737">
    <property type="term" value="C:cytoplasm"/>
    <property type="evidence" value="ECO:0000314"/>
    <property type="project" value="UniProtKB"/>
</dbReference>
<dbReference type="GO" id="GO:0031410">
    <property type="term" value="C:cytoplasmic vesicle"/>
    <property type="evidence" value="ECO:0000250"/>
    <property type="project" value="BHF-UCL"/>
</dbReference>
<dbReference type="GO" id="GO:0005829">
    <property type="term" value="C:cytosol"/>
    <property type="evidence" value="ECO:0000304"/>
    <property type="project" value="Reactome"/>
</dbReference>
<dbReference type="GO" id="GO:0016328">
    <property type="term" value="C:lateral plasma membrane"/>
    <property type="evidence" value="ECO:0000314"/>
    <property type="project" value="MGI"/>
</dbReference>
<dbReference type="GO" id="GO:0015630">
    <property type="term" value="C:microtubule cytoskeleton"/>
    <property type="evidence" value="ECO:0007669"/>
    <property type="project" value="Ensembl"/>
</dbReference>
<dbReference type="GO" id="GO:0005730">
    <property type="term" value="C:nucleolus"/>
    <property type="evidence" value="ECO:0000314"/>
    <property type="project" value="HPA"/>
</dbReference>
<dbReference type="GO" id="GO:0005634">
    <property type="term" value="C:nucleus"/>
    <property type="evidence" value="ECO:0000314"/>
    <property type="project" value="UniProtKB"/>
</dbReference>
<dbReference type="GO" id="GO:0048471">
    <property type="term" value="C:perinuclear region of cytoplasm"/>
    <property type="evidence" value="ECO:0000314"/>
    <property type="project" value="BHF-UCL"/>
</dbReference>
<dbReference type="GO" id="GO:0005886">
    <property type="term" value="C:plasma membrane"/>
    <property type="evidence" value="ECO:0000318"/>
    <property type="project" value="GO_Central"/>
</dbReference>
<dbReference type="GO" id="GO:1990909">
    <property type="term" value="C:Wnt signalosome"/>
    <property type="evidence" value="ECO:0007669"/>
    <property type="project" value="Ensembl"/>
</dbReference>
<dbReference type="GO" id="GO:0070016">
    <property type="term" value="F:armadillo repeat domain binding"/>
    <property type="evidence" value="ECO:0000250"/>
    <property type="project" value="BHF-UCL"/>
</dbReference>
<dbReference type="GO" id="GO:0008013">
    <property type="term" value="F:beta-catenin binding"/>
    <property type="evidence" value="ECO:0000314"/>
    <property type="project" value="BHF-UCL"/>
</dbReference>
<dbReference type="GO" id="GO:0019899">
    <property type="term" value="F:enzyme binding"/>
    <property type="evidence" value="ECO:0000353"/>
    <property type="project" value="UniProtKB"/>
</dbReference>
<dbReference type="GO" id="GO:0070411">
    <property type="term" value="F:I-SMAD binding"/>
    <property type="evidence" value="ECO:0000353"/>
    <property type="project" value="BHF-UCL"/>
</dbReference>
<dbReference type="GO" id="GO:0042802">
    <property type="term" value="F:identical protein binding"/>
    <property type="evidence" value="ECO:0000353"/>
    <property type="project" value="IntAct"/>
</dbReference>
<dbReference type="GO" id="GO:0060090">
    <property type="term" value="F:molecular adaptor activity"/>
    <property type="evidence" value="ECO:0000314"/>
    <property type="project" value="BHF-UCL"/>
</dbReference>
<dbReference type="GO" id="GO:0002039">
    <property type="term" value="F:p53 binding"/>
    <property type="evidence" value="ECO:0007669"/>
    <property type="project" value="Ensembl"/>
</dbReference>
<dbReference type="GO" id="GO:0042803">
    <property type="term" value="F:protein homodimerization activity"/>
    <property type="evidence" value="ECO:0000250"/>
    <property type="project" value="UniProtKB"/>
</dbReference>
<dbReference type="GO" id="GO:0019901">
    <property type="term" value="F:protein kinase binding"/>
    <property type="evidence" value="ECO:0000250"/>
    <property type="project" value="BHF-UCL"/>
</dbReference>
<dbReference type="GO" id="GO:0043539">
    <property type="term" value="F:protein serine/threonine kinase activator activity"/>
    <property type="evidence" value="ECO:0000314"/>
    <property type="project" value="BHF-UCL"/>
</dbReference>
<dbReference type="GO" id="GO:0120283">
    <property type="term" value="F:protein serine/threonine kinase binding"/>
    <property type="evidence" value="ECO:0000353"/>
    <property type="project" value="BHF-UCL"/>
</dbReference>
<dbReference type="GO" id="GO:0070412">
    <property type="term" value="F:R-SMAD binding"/>
    <property type="evidence" value="ECO:0007669"/>
    <property type="project" value="Ensembl"/>
</dbReference>
<dbReference type="GO" id="GO:0035591">
    <property type="term" value="F:signaling adaptor activity"/>
    <property type="evidence" value="ECO:0000304"/>
    <property type="project" value="BHF-UCL"/>
</dbReference>
<dbReference type="GO" id="GO:0046332">
    <property type="term" value="F:SMAD binding"/>
    <property type="evidence" value="ECO:0000353"/>
    <property type="project" value="BHF-UCL"/>
</dbReference>
<dbReference type="GO" id="GO:0031625">
    <property type="term" value="F:ubiquitin protein ligase binding"/>
    <property type="evidence" value="ECO:0000353"/>
    <property type="project" value="UniProtKB"/>
</dbReference>
<dbReference type="GO" id="GO:1990756">
    <property type="term" value="F:ubiquitin-like ligase-substrate adaptor activity"/>
    <property type="evidence" value="ECO:0000315"/>
    <property type="project" value="BHF-UCL"/>
</dbReference>
<dbReference type="GO" id="GO:0006915">
    <property type="term" value="P:apoptotic process"/>
    <property type="evidence" value="ECO:0007669"/>
    <property type="project" value="UniProtKB-KW"/>
</dbReference>
<dbReference type="GO" id="GO:0048320">
    <property type="term" value="P:axial mesoderm formation"/>
    <property type="evidence" value="ECO:0007669"/>
    <property type="project" value="Ensembl"/>
</dbReference>
<dbReference type="GO" id="GO:1904885">
    <property type="term" value="P:beta-catenin destruction complex assembly"/>
    <property type="evidence" value="ECO:0000314"/>
    <property type="project" value="BHF-UCL"/>
</dbReference>
<dbReference type="GO" id="GO:0060070">
    <property type="term" value="P:canonical Wnt signaling pathway"/>
    <property type="evidence" value="ECO:0007669"/>
    <property type="project" value="Ensembl"/>
</dbReference>
<dbReference type="GO" id="GO:0048468">
    <property type="term" value="P:cell development"/>
    <property type="evidence" value="ECO:0000318"/>
    <property type="project" value="GO_Central"/>
</dbReference>
<dbReference type="GO" id="GO:0031122">
    <property type="term" value="P:cytoplasmic microtubule organization"/>
    <property type="evidence" value="ECO:0007669"/>
    <property type="project" value="Ensembl"/>
</dbReference>
<dbReference type="GO" id="GO:0009950">
    <property type="term" value="P:dorsal/ventral axis specification"/>
    <property type="evidence" value="ECO:0007669"/>
    <property type="project" value="Ensembl"/>
</dbReference>
<dbReference type="GO" id="GO:0044725">
    <property type="term" value="P:epigenetic programming in the zygotic pronuclei"/>
    <property type="evidence" value="ECO:0007669"/>
    <property type="project" value="Ensembl"/>
</dbReference>
<dbReference type="GO" id="GO:0060322">
    <property type="term" value="P:head development"/>
    <property type="evidence" value="ECO:0007669"/>
    <property type="project" value="Ensembl"/>
</dbReference>
<dbReference type="GO" id="GO:0001701">
    <property type="term" value="P:in utero embryonic development"/>
    <property type="evidence" value="ECO:0007669"/>
    <property type="project" value="Ensembl"/>
</dbReference>
<dbReference type="GO" id="GO:0090090">
    <property type="term" value="P:negative regulation of canonical Wnt signaling pathway"/>
    <property type="evidence" value="ECO:0000314"/>
    <property type="project" value="BHF-UCL"/>
</dbReference>
<dbReference type="GO" id="GO:0045599">
    <property type="term" value="P:negative regulation of fat cell differentiation"/>
    <property type="evidence" value="ECO:0007669"/>
    <property type="project" value="Ensembl"/>
</dbReference>
<dbReference type="GO" id="GO:0010629">
    <property type="term" value="P:negative regulation of gene expression"/>
    <property type="evidence" value="ECO:0007669"/>
    <property type="project" value="Ensembl"/>
</dbReference>
<dbReference type="GO" id="GO:0051248">
    <property type="term" value="P:negative regulation of protein metabolic process"/>
    <property type="evidence" value="ECO:0007669"/>
    <property type="project" value="Ensembl"/>
</dbReference>
<dbReference type="GO" id="GO:0034244">
    <property type="term" value="P:negative regulation of transcription elongation by RNA polymerase II"/>
    <property type="evidence" value="ECO:0007669"/>
    <property type="project" value="Ensembl"/>
</dbReference>
<dbReference type="GO" id="GO:0006913">
    <property type="term" value="P:nucleocytoplasmic transport"/>
    <property type="evidence" value="ECO:0007669"/>
    <property type="project" value="Ensembl"/>
</dbReference>
<dbReference type="GO" id="GO:0046330">
    <property type="term" value="P:positive regulation of JNK cascade"/>
    <property type="evidence" value="ECO:0000250"/>
    <property type="project" value="UniProtKB"/>
</dbReference>
<dbReference type="GO" id="GO:0032436">
    <property type="term" value="P:positive regulation of proteasomal ubiquitin-dependent protein catabolic process"/>
    <property type="evidence" value="ECO:0000318"/>
    <property type="project" value="GO_Central"/>
</dbReference>
<dbReference type="GO" id="GO:0045732">
    <property type="term" value="P:positive regulation of protein catabolic process"/>
    <property type="evidence" value="ECO:0000314"/>
    <property type="project" value="BHF-UCL"/>
</dbReference>
<dbReference type="GO" id="GO:0031398">
    <property type="term" value="P:positive regulation of protein ubiquitination"/>
    <property type="evidence" value="ECO:0000315"/>
    <property type="project" value="BHF-UCL"/>
</dbReference>
<dbReference type="GO" id="GO:0030511">
    <property type="term" value="P:positive regulation of transforming growth factor beta receptor signaling pathway"/>
    <property type="evidence" value="ECO:0007669"/>
    <property type="project" value="Ensembl"/>
</dbReference>
<dbReference type="GO" id="GO:2000060">
    <property type="term" value="P:positive regulation of ubiquitin-dependent protein catabolic process"/>
    <property type="evidence" value="ECO:0000250"/>
    <property type="project" value="BHF-UCL"/>
</dbReference>
<dbReference type="GO" id="GO:0036342">
    <property type="term" value="P:post-anal tail morphogenesis"/>
    <property type="evidence" value="ECO:0007669"/>
    <property type="project" value="Ensembl"/>
</dbReference>
<dbReference type="GO" id="GO:0043161">
    <property type="term" value="P:proteasome-mediated ubiquitin-dependent protein catabolic process"/>
    <property type="evidence" value="ECO:0000303"/>
    <property type="project" value="ComplexPortal"/>
</dbReference>
<dbReference type="GO" id="GO:0000209">
    <property type="term" value="P:protein polyubiquitination"/>
    <property type="evidence" value="ECO:0007669"/>
    <property type="project" value="Ensembl"/>
</dbReference>
<dbReference type="GO" id="GO:0065003">
    <property type="term" value="P:protein-containing complex assembly"/>
    <property type="evidence" value="ECO:0000314"/>
    <property type="project" value="BHF-UCL"/>
</dbReference>
<dbReference type="GO" id="GO:0007605">
    <property type="term" value="P:sensory perception of sound"/>
    <property type="evidence" value="ECO:0007669"/>
    <property type="project" value="Ensembl"/>
</dbReference>
<dbReference type="CDD" id="cd11582">
    <property type="entry name" value="Axin_TNKS_binding"/>
    <property type="match status" value="1"/>
</dbReference>
<dbReference type="CDD" id="cd08707">
    <property type="entry name" value="RGS_Axin"/>
    <property type="match status" value="1"/>
</dbReference>
<dbReference type="DisProt" id="DP00959"/>
<dbReference type="FunFam" id="1.10.167.10:FF:000003">
    <property type="entry name" value="Axin 1"/>
    <property type="match status" value="1"/>
</dbReference>
<dbReference type="FunFam" id="1.10.196.10:FF:000002">
    <property type="entry name" value="Axin 1"/>
    <property type="match status" value="1"/>
</dbReference>
<dbReference type="FunFam" id="2.40.240.130:FF:000002">
    <property type="entry name" value="Axin 1"/>
    <property type="match status" value="1"/>
</dbReference>
<dbReference type="Gene3D" id="1.10.196.10">
    <property type="match status" value="2"/>
</dbReference>
<dbReference type="Gene3D" id="2.40.240.130">
    <property type="match status" value="1"/>
</dbReference>
<dbReference type="Gene3D" id="1.10.167.10">
    <property type="entry name" value="Regulator of G-protein Signalling 4, domain 2"/>
    <property type="match status" value="1"/>
</dbReference>
<dbReference type="IDEAL" id="IID00007"/>
<dbReference type="InterPro" id="IPR043581">
    <property type="entry name" value="Axin-like"/>
</dbReference>
<dbReference type="InterPro" id="IPR014936">
    <property type="entry name" value="Axin_b-cat-bd"/>
</dbReference>
<dbReference type="InterPro" id="IPR032101">
    <property type="entry name" value="Axin_TNKS-bd"/>
</dbReference>
<dbReference type="InterPro" id="IPR001158">
    <property type="entry name" value="DIX"/>
</dbReference>
<dbReference type="InterPro" id="IPR038207">
    <property type="entry name" value="DIX_dom_sf"/>
</dbReference>
<dbReference type="InterPro" id="IPR016137">
    <property type="entry name" value="RGS"/>
</dbReference>
<dbReference type="InterPro" id="IPR036305">
    <property type="entry name" value="RGS_sf"/>
</dbReference>
<dbReference type="InterPro" id="IPR024066">
    <property type="entry name" value="RGS_subdom1/3"/>
</dbReference>
<dbReference type="InterPro" id="IPR044926">
    <property type="entry name" value="RGS_subdomain_2"/>
</dbReference>
<dbReference type="InterPro" id="IPR029071">
    <property type="entry name" value="Ubiquitin-like_domsf"/>
</dbReference>
<dbReference type="PANTHER" id="PTHR46102">
    <property type="entry name" value="AXIN"/>
    <property type="match status" value="1"/>
</dbReference>
<dbReference type="PANTHER" id="PTHR46102:SF3">
    <property type="entry name" value="AXIN-1"/>
    <property type="match status" value="1"/>
</dbReference>
<dbReference type="Pfam" id="PF16646">
    <property type="entry name" value="AXIN1_TNKS_BD"/>
    <property type="match status" value="1"/>
</dbReference>
<dbReference type="Pfam" id="PF08833">
    <property type="entry name" value="Axin_b-cat_bind"/>
    <property type="match status" value="1"/>
</dbReference>
<dbReference type="Pfam" id="PF00778">
    <property type="entry name" value="DIX"/>
    <property type="match status" value="1"/>
</dbReference>
<dbReference type="Pfam" id="PF00615">
    <property type="entry name" value="RGS"/>
    <property type="match status" value="1"/>
</dbReference>
<dbReference type="PRINTS" id="PR01301">
    <property type="entry name" value="RGSPROTEIN"/>
</dbReference>
<dbReference type="SMART" id="SM00021">
    <property type="entry name" value="DAX"/>
    <property type="match status" value="1"/>
</dbReference>
<dbReference type="SMART" id="SM00315">
    <property type="entry name" value="RGS"/>
    <property type="match status" value="1"/>
</dbReference>
<dbReference type="SUPFAM" id="SSF48097">
    <property type="entry name" value="Regulator of G-protein signaling, RGS"/>
    <property type="match status" value="1"/>
</dbReference>
<dbReference type="SUPFAM" id="SSF54236">
    <property type="entry name" value="Ubiquitin-like"/>
    <property type="match status" value="1"/>
</dbReference>
<dbReference type="PROSITE" id="PS50841">
    <property type="entry name" value="DIX"/>
    <property type="match status" value="1"/>
</dbReference>
<dbReference type="PROSITE" id="PS50132">
    <property type="entry name" value="RGS"/>
    <property type="match status" value="1"/>
</dbReference>
<feature type="chain" id="PRO_0000220888" description="Axin-1">
    <location>
        <begin position="1"/>
        <end position="862"/>
    </location>
</feature>
<feature type="domain" description="RGS" evidence="5">
    <location>
        <begin position="88"/>
        <end position="211"/>
    </location>
</feature>
<feature type="domain" description="DIX" evidence="4">
    <location>
        <begin position="780"/>
        <end position="862"/>
    </location>
</feature>
<feature type="region of interest" description="Disordered" evidence="6">
    <location>
        <begin position="1"/>
        <end position="78"/>
    </location>
</feature>
<feature type="region of interest" description="Interaction with TP53" evidence="1">
    <location>
        <begin position="209"/>
        <end position="338"/>
    </location>
</feature>
<feature type="region of interest" description="Disordered" evidence="6">
    <location>
        <begin position="215"/>
        <end position="289"/>
    </location>
</feature>
<feature type="region of interest" description="Disordered" evidence="6">
    <location>
        <begin position="316"/>
        <end position="344"/>
    </location>
</feature>
<feature type="region of interest" description="Interaction with GSK3B" evidence="3">
    <location>
        <begin position="348"/>
        <end position="433"/>
    </location>
</feature>
<feature type="region of interest" description="Interaction with SIAH1 and SIAH2" evidence="24">
    <location>
        <begin position="353"/>
        <end position="411"/>
    </location>
</feature>
<feature type="region of interest" description="Disordered" evidence="6">
    <location>
        <begin position="413"/>
        <end position="441"/>
    </location>
</feature>
<feature type="region of interest" description="Interaction with CTNNB1" evidence="1">
    <location>
        <begin position="434"/>
        <end position="502"/>
    </location>
</feature>
<feature type="region of interest" description="Disordered" evidence="6">
    <location>
        <begin position="480"/>
        <end position="500"/>
    </location>
</feature>
<feature type="region of interest" description="Interaction with RNF111" evidence="14">
    <location>
        <begin position="507"/>
        <end position="757"/>
    </location>
</feature>
<feature type="region of interest" description="Disordered" evidence="6">
    <location>
        <begin position="531"/>
        <end position="629"/>
    </location>
</feature>
<feature type="region of interest" description="Interaction with PPP2CA" evidence="27">
    <location>
        <begin position="575"/>
        <end position="789"/>
    </location>
</feature>
<feature type="region of interest" description="Disordered" evidence="6">
    <location>
        <begin position="641"/>
        <end position="679"/>
    </location>
</feature>
<feature type="region of interest" description="Interaction with HIPK2" evidence="1">
    <location>
        <begin position="677"/>
        <end position="752"/>
    </location>
</feature>
<feature type="short sequence motif" description="Tankyrase-binding motif">
    <location>
        <begin position="20"/>
        <end position="29"/>
    </location>
</feature>
<feature type="compositionally biased region" description="Acidic residues" evidence="6">
    <location>
        <begin position="242"/>
        <end position="258"/>
    </location>
</feature>
<feature type="compositionally biased region" description="Low complexity" evidence="6">
    <location>
        <begin position="325"/>
        <end position="339"/>
    </location>
</feature>
<feature type="compositionally biased region" description="Pro residues" evidence="6">
    <location>
        <begin position="429"/>
        <end position="441"/>
    </location>
</feature>
<feature type="compositionally biased region" description="Basic residues" evidence="6">
    <location>
        <begin position="531"/>
        <end position="544"/>
    </location>
</feature>
<feature type="compositionally biased region" description="Basic and acidic residues" evidence="6">
    <location>
        <begin position="545"/>
        <end position="556"/>
    </location>
</feature>
<feature type="modified residue" description="Phosphoserine; by CK1" evidence="17">
    <location>
        <position position="75"/>
    </location>
</feature>
<feature type="modified residue" description="Phosphoserine; by CK1" evidence="17 30">
    <location>
        <position position="77"/>
    </location>
</feature>
<feature type="modified residue" description="Phosphoserine; by CK1" evidence="17">
    <location>
        <position position="217"/>
    </location>
</feature>
<feature type="modified residue" description="Phosphoserine; by CK1" evidence="17">
    <location>
        <position position="469"/>
    </location>
</feature>
<feature type="modified residue" description="Phosphothreonine; by GSK3-beta" evidence="2">
    <location>
        <position position="481"/>
    </location>
</feature>
<feature type="modified residue" description="Phosphoserine" evidence="30">
    <location>
        <position position="486"/>
    </location>
</feature>
<feature type="modified residue" description="Phosphoserine" evidence="2">
    <location>
        <position position="493"/>
    </location>
</feature>
<feature type="modified residue" description="Phosphoserine" evidence="30">
    <location>
        <position position="511"/>
    </location>
</feature>
<feature type="modified residue" description="Phosphoserine" evidence="30">
    <location>
        <position position="581"/>
    </location>
</feature>
<feature type="cross-link" description="Glycyl lysine isopeptide (Lys-Gly) (interchain with G-Cter in SUMO)" evidence="1">
    <location>
        <position position="857"/>
    </location>
</feature>
<feature type="cross-link" description="Glycyl lysine isopeptide (Lys-Gly) (interchain with G-Cter in SUMO)" evidence="1">
    <location>
        <position position="860"/>
    </location>
</feature>
<feature type="splice variant" id="VSP_019398" description="In isoform 2." evidence="28">
    <location>
        <begin position="730"/>
        <end position="765"/>
    </location>
</feature>
<feature type="sequence variant" id="VAR_015589" description="In HCC; uncertain significance; somatic mutation." evidence="9">
    <original>L</original>
    <variation>R</variation>
    <location>
        <position position="106"/>
    </location>
</feature>
<feature type="sequence variant" id="VAR_015590" description="In HCC; uncertain significance; somatic mutation; dbSNP:rs779951904." evidence="9">
    <original>P</original>
    <variation>L</variation>
    <location>
        <position position="345"/>
    </location>
</feature>
<feature type="sequence variant" id="VAR_015591" description="In HCC; uncertain significance; somatic mutation; dbSNP:rs116350678." evidence="9">
    <original>G</original>
    <variation>S</variation>
    <location>
        <position position="425"/>
    </location>
</feature>
<feature type="sequence variant" id="VAR_015592" description="In dbSNP:rs117208012." evidence="9">
    <original>G</original>
    <variation>S</variation>
    <location>
        <position position="650"/>
    </location>
</feature>
<feature type="sequence variant" id="VAR_089057" description="In CMDOH; likely pathogenic; loss of negative regulation of canonical Wnt signaling pathway; results in enhanced basal Wnt signaling in primary homozygous patient-derived fibroblasts and in genome-edited cells; the mutant protein is expressed at low levels in primary homozygous patient-derived fibroblasts." evidence="26">
    <location>
        <begin position="723"/>
        <end position="862"/>
    </location>
</feature>
<feature type="sequence variant" id="VAR_089058" description="In CMDOH; uncertain significance." evidence="26">
    <location>
        <begin position="841"/>
        <end position="862"/>
    </location>
</feature>
<feature type="sequence variant" id="VAR_015593" description="In dbSNP:rs34015754." evidence="9">
    <original>R</original>
    <variation>Q</variation>
    <location>
        <position position="841"/>
    </location>
</feature>
<feature type="mutagenesis site" description="Loss of interaction with SIAH1. Decreased SIAH1-induced proteasome-mediated ubiquitin-dependent degradation of AXIN1. No effect on interaction with GSK3B." evidence="24">
    <original>V</original>
    <variation>A</variation>
    <location>
        <position position="383"/>
    </location>
</feature>
<feature type="mutagenesis site" description="Loss of interaction with SIAH1. Decreased SIAH1-induced proteasome-mediated ubiquitin-dependent degradation of AXIN1. No effect on interaction with GSK3B." evidence="24">
    <original>P</original>
    <variation>A</variation>
    <location>
        <position position="385"/>
    </location>
</feature>
<feature type="sequence conflict" description="In Ref. 1; AAC51624." evidence="29" ref="1">
    <original>V</original>
    <variation>A</variation>
    <location>
        <position position="360"/>
    </location>
</feature>
<feature type="sequence conflict" description="In Ref. 1; AAC51624." evidence="29" ref="1">
    <original>CVDMG</original>
    <variation>LCWTWA</variation>
    <location>
        <begin position="451"/>
        <end position="455"/>
    </location>
</feature>
<feature type="sequence conflict" description="In Ref. 1; AAC51624." evidence="29" ref="1">
    <original>P</original>
    <variation>T</variation>
    <location>
        <position position="482"/>
    </location>
</feature>
<feature type="helix" evidence="31">
    <location>
        <begin position="81"/>
        <end position="87"/>
    </location>
</feature>
<feature type="helix" evidence="31">
    <location>
        <begin position="89"/>
        <end position="92"/>
    </location>
</feature>
<feature type="helix" evidence="31">
    <location>
        <begin position="96"/>
        <end position="107"/>
    </location>
</feature>
<feature type="turn" evidence="31">
    <location>
        <begin position="108"/>
        <end position="110"/>
    </location>
</feature>
<feature type="helix" evidence="31">
    <location>
        <begin position="112"/>
        <end position="126"/>
    </location>
</feature>
<feature type="helix" evidence="32">
    <location>
        <begin position="131"/>
        <end position="133"/>
    </location>
</feature>
<feature type="helix" evidence="31">
    <location>
        <begin position="134"/>
        <end position="148"/>
    </location>
</feature>
<feature type="helix" evidence="31">
    <location>
        <begin position="155"/>
        <end position="159"/>
    </location>
</feature>
<feature type="helix" evidence="31">
    <location>
        <begin position="162"/>
        <end position="174"/>
    </location>
</feature>
<feature type="turn" evidence="31">
    <location>
        <begin position="179"/>
        <end position="182"/>
    </location>
</feature>
<feature type="helix" evidence="31">
    <location>
        <begin position="183"/>
        <end position="195"/>
    </location>
</feature>
<feature type="helix" evidence="31">
    <location>
        <begin position="197"/>
        <end position="201"/>
    </location>
</feature>
<feature type="helix" evidence="31">
    <location>
        <begin position="205"/>
        <end position="208"/>
    </location>
</feature>
<feature type="turn" evidence="31">
    <location>
        <begin position="209"/>
        <end position="212"/>
    </location>
</feature>
<feature type="strand" evidence="33">
    <location>
        <begin position="379"/>
        <end position="383"/>
    </location>
</feature>
<feature type="helix" evidence="35">
    <location>
        <begin position="385"/>
        <end position="397"/>
    </location>
</feature>
<feature type="helix" evidence="36">
    <location>
        <begin position="469"/>
        <end position="478"/>
    </location>
</feature>
<feature type="strand" evidence="34">
    <location>
        <begin position="782"/>
        <end position="786"/>
    </location>
</feature>
<feature type="strand" evidence="34">
    <location>
        <begin position="798"/>
        <end position="801"/>
    </location>
</feature>
<feature type="helix" evidence="34">
    <location>
        <begin position="807"/>
        <end position="811"/>
    </location>
</feature>
<feature type="strand" evidence="34">
    <location>
        <begin position="818"/>
        <end position="826"/>
    </location>
</feature>
<feature type="strand" evidence="34">
    <location>
        <begin position="836"/>
        <end position="839"/>
    </location>
</feature>
<feature type="strand" evidence="34">
    <location>
        <begin position="853"/>
        <end position="860"/>
    </location>
</feature>
<keyword id="KW-0002">3D-structure</keyword>
<keyword id="KW-0013">ADP-ribosylation</keyword>
<keyword id="KW-0025">Alternative splicing</keyword>
<keyword id="KW-0053">Apoptosis</keyword>
<keyword id="KW-1003">Cell membrane</keyword>
<keyword id="KW-0963">Cytoplasm</keyword>
<keyword id="KW-0217">Developmental protein</keyword>
<keyword id="KW-0225">Disease variant</keyword>
<keyword id="KW-1017">Isopeptide bond</keyword>
<keyword id="KW-0472">Membrane</keyword>
<keyword id="KW-0539">Nucleus</keyword>
<keyword id="KW-0597">Phosphoprotein</keyword>
<keyword id="KW-1267">Proteomics identification</keyword>
<keyword id="KW-1185">Reference proteome</keyword>
<keyword id="KW-0043">Tumor suppressor</keyword>
<keyword id="KW-0832">Ubl conjugation</keyword>
<keyword id="KW-0879">Wnt signaling pathway</keyword>
<comment type="function">
    <text evidence="10 14 16 23 24">Component of the beta-catenin destruction complex required for regulating CTNNB1 levels through phosphorylation and ubiquitination, and modulating Wnt-signaling (PubMed:12192039, PubMed:27098453, PubMed:28829046). Controls dorsoventral patterning via two opposing effects; down-regulates CTNNB1 to inhibit the Wnt signaling pathway and ventralize embryos, but also dorsalizes embryos by activating a Wnt-independent JNK signaling pathway (PubMed:12192039). In Wnt signaling, probably facilitates the phosphorylation of CTNNB1 and APC by GSK3B (PubMed:12192039). Likely to function as a tumor suppressor. Enhances TGF-beta signaling by recruiting the RNF111 E3 ubiquitin ligase and promoting the degradation of inhibitory SMAD7 (PubMed:16601693). Also a component of the AXIN1-HIPK2-TP53 complex which controls cell growth, apoptosis and development (PubMed:17210684). Facilitates the phosphorylation of TP53 by HIPK2 upon ultraviolet irradiation (PubMed:17210684).</text>
</comment>
<comment type="subunit">
    <text evidence="2 3 7 8 10 11 12 13 14 16 17 19 21 22 23 24 25 27">Homodimer (By similarity). Interacts with ZBED3; the interaction is direct, enhanced by protein kinase GSK3B and casein kinase CSNK1E activities and decreases GSK3B-induced beta-catenin serine and threonine phosphorylations (By similarity). Component of the beta-catenin destruction complex, containing at least, CTNNB1, an axin and GSK3B, that regulates CTNNB1 protein levels through phosphorylation and ubiquitination. Interacts with CTNNB1 (via the armadillo repeats 2-7). Interacts with GSK3B; the interaction hyperphosphorylates CTNNB1 leading to its ubiquitination and destruction (PubMed:12554650, PubMed:17318175, PubMed:28546513). Component of the AXIN1-HIPK2-TP53 complex (PubMed:17210684). Interacts directly in the complex with TP53 and HIPK2 (PubMed:17210684). Interacts with DAXX; the interaction stimulates the interaction of DAXX with TP53, stimulates 'Ser-46' phosphorylation of TP53 and induces cell death on UV irradiation (PubMed:17210684). Also binds APC, SMAD6, SMAD7 and RNF111 (PubMed:10811618, PubMed:16601693). Interacts with DIXDC1; prevents interaction with MAP3K1 (PubMed:15262978). Interacts with MAP3K4 (PubMed:15262978). Interacts with ANKRD6 and AIDA (By similarity). Interacts with MDFI; the interaction decreases AXIN1-mediated JUN N-terminal kinase (JNK) activation (PubMed:12192039). Interacts with MDFIC; the interaction inhibits beta-cateninin-mediated signaling and AXIN1-mediated JUN N-terminal kinase (JNK) activation (PubMed:12192039). Interacts with LRP5 (via its phosphorylated PPPSP motifs); the interaction is stimulated by WNT1 and GSK3B and activates beta-catenin signaling (PubMed:11336703). Interacts (via the C-terminal) with PPP1CA; the interaction dephosphorylates AXIN1 and regulates interaction with GSK3B (PubMed:9920888). Interacts with PPP2CA; the interaction dephosphorylates AXIN1 (PubMed:9920888). Interacts with MACF1 (By similarity). Found in a complex composed of MACF1, APC, AXIN1, CTNNB1 and GSK3B (By similarity). Interacts with TNKS (PubMed:19759537, PubMed:21478859, PubMed:21799911). Interacts with DAB2; the interaction is mutually exclusive with the AXIN1:PPP1CA interaction (PubMed:12805222). Interacts with WDR26 (PubMed:27098453). Interacts with GID8 (PubMed:28829046). Interacts with SIAH1 and SIAH2; both probably catalyze AXIN1 ubiquitination and subsequent proteasome-mediated ubiquitin-dependent degradation (PubMed:28546513). Interaction with GSK3B and AXIN1 is competitive (PubMed:28546513).</text>
</comment>
<comment type="interaction">
    <interactant intactId="EBI-710484">
        <id>O15169</id>
    </interactant>
    <interactant intactId="EBI-6169747">
        <id>Q5JTC6</id>
        <label>AMER1</label>
    </interactant>
    <organismsDiffer>false</organismsDiffer>
    <experiments>7</experiments>
</comment>
<comment type="interaction">
    <interactant intactId="EBI-710484">
        <id>O15169</id>
    </interactant>
    <interactant intactId="EBI-359234">
        <id>P39687</id>
        <label>ANP32A</label>
    </interactant>
    <organismsDiffer>false</organismsDiffer>
    <experiments>2</experiments>
</comment>
<comment type="interaction">
    <interactant intactId="EBI-710484">
        <id>O15169</id>
    </interactant>
    <interactant intactId="EBI-727707">
        <id>P25054</id>
        <label>APC</label>
    </interactant>
    <organismsDiffer>false</organismsDiffer>
    <experiments>17</experiments>
</comment>
<comment type="interaction">
    <interactant intactId="EBI-710484">
        <id>O15169</id>
    </interactant>
    <interactant intactId="EBI-743313">
        <id>P49407</id>
        <label>ARRB1</label>
    </interactant>
    <organismsDiffer>false</organismsDiffer>
    <experiments>2</experiments>
</comment>
<comment type="interaction">
    <interactant intactId="EBI-710484">
        <id>O15169</id>
    </interactant>
    <interactant intactId="EBI-710484">
        <id>O15169</id>
        <label>AXIN1</label>
    </interactant>
    <organismsDiffer>false</organismsDiffer>
    <experiments>5</experiments>
</comment>
<comment type="interaction">
    <interactant intactId="EBI-710484">
        <id>O15169</id>
    </interactant>
    <interactant intactId="EBI-739580">
        <id>Q13137</id>
        <label>CALCOCO2</label>
    </interactant>
    <organismsDiffer>false</organismsDiffer>
    <experiments>3</experiments>
</comment>
<comment type="interaction">
    <interactant intactId="EBI-710484">
        <id>O15169</id>
    </interactant>
    <interactant intactId="EBI-11530605">
        <id>Q9H257-2</id>
        <label>CARD9</label>
    </interactant>
    <organismsDiffer>false</organismsDiffer>
    <experiments>3</experiments>
</comment>
<comment type="interaction">
    <interactant intactId="EBI-710484">
        <id>O15169</id>
    </interactant>
    <interactant intactId="EBI-10961624">
        <id>Q2TAC2-2</id>
        <label>CCDC57</label>
    </interactant>
    <organismsDiffer>false</organismsDiffer>
    <experiments>3</experiments>
</comment>
<comment type="interaction">
    <interactant intactId="EBI-710484">
        <id>O15169</id>
    </interactant>
    <interactant intactId="EBI-473101">
        <id>Q14194</id>
        <label>CRMP1</label>
    </interactant>
    <organismsDiffer>false</organismsDiffer>
    <experiments>2</experiments>
</comment>
<comment type="interaction">
    <interactant intactId="EBI-710484">
        <id>O15169</id>
    </interactant>
    <interactant intactId="EBI-749343">
        <id>P49674</id>
        <label>CSNK1E</label>
    </interactant>
    <organismsDiffer>false</organismsDiffer>
    <experiments>5</experiments>
</comment>
<comment type="interaction">
    <interactant intactId="EBI-710484">
        <id>O15169</id>
    </interactant>
    <interactant intactId="EBI-491549">
        <id>P35222</id>
        <label>CTNNB1</label>
    </interactant>
    <organismsDiffer>false</organismsDiffer>
    <experiments>44</experiments>
</comment>
<comment type="interaction">
    <interactant intactId="EBI-710484">
        <id>O15169</id>
    </interactant>
    <interactant intactId="EBI-9543020">
        <id>Q5VWQ8-2</id>
        <label>DAB2IP</label>
    </interactant>
    <organismsDiffer>false</organismsDiffer>
    <experiments>2</experiments>
</comment>
<comment type="interaction">
    <interactant intactId="EBI-710484">
        <id>O15169</id>
    </interactant>
    <interactant intactId="EBI-740850">
        <id>O14641</id>
        <label>DVL2</label>
    </interactant>
    <organismsDiffer>false</organismsDiffer>
    <experiments>3</experiments>
</comment>
<comment type="interaction">
    <interactant intactId="EBI-710484">
        <id>O15169</id>
    </interactant>
    <interactant intactId="EBI-355189">
        <id>Q9UKB1</id>
        <label>FBXW11</label>
    </interactant>
    <organismsDiffer>false</organismsDiffer>
    <experiments>4</experiments>
</comment>
<comment type="interaction">
    <interactant intactId="EBI-710484">
        <id>O15169</id>
    </interactant>
    <interactant intactId="EBI-618309">
        <id>Q08379</id>
        <label>GOLGA2</label>
    </interactant>
    <organismsDiffer>false</organismsDiffer>
    <experiments>3</experiments>
</comment>
<comment type="interaction">
    <interactant intactId="EBI-710484">
        <id>O15169</id>
    </interactant>
    <interactant intactId="EBI-1044067">
        <id>P49840</id>
        <label>GSK3A</label>
    </interactant>
    <organismsDiffer>false</organismsDiffer>
    <experiments>6</experiments>
</comment>
<comment type="interaction">
    <interactant intactId="EBI-710484">
        <id>O15169</id>
    </interactant>
    <interactant intactId="EBI-373586">
        <id>P49841</id>
        <label>GSK3B</label>
    </interactant>
    <organismsDiffer>false</organismsDiffer>
    <experiments>52</experiments>
</comment>
<comment type="interaction">
    <interactant intactId="EBI-710484">
        <id>O15169</id>
    </interactant>
    <interactant intactId="EBI-702484">
        <id>P14923</id>
        <label>JUP</label>
    </interactant>
    <organismsDiffer>false</organismsDiffer>
    <experiments>4</experiments>
</comment>
<comment type="interaction">
    <interactant intactId="EBI-710484">
        <id>O15169</id>
    </interactant>
    <interactant intactId="EBI-10171697">
        <id>Q6A162</id>
        <label>KRT40</label>
    </interactant>
    <organismsDiffer>false</organismsDiffer>
    <experiments>3</experiments>
</comment>
<comment type="interaction">
    <interactant intactId="EBI-710484">
        <id>O15169</id>
    </interactant>
    <interactant intactId="EBI-739863">
        <id>Q9BQ66</id>
        <label>KRTAP4-12</label>
    </interactant>
    <organismsDiffer>false</organismsDiffer>
    <experiments>3</experiments>
</comment>
<comment type="interaction">
    <interactant intactId="EBI-710484">
        <id>O15169</id>
    </interactant>
    <interactant intactId="EBI-10172511">
        <id>Q9BYR5</id>
        <label>KRTAP4-2</label>
    </interactant>
    <organismsDiffer>false</organismsDiffer>
    <experiments>3</experiments>
</comment>
<comment type="interaction">
    <interactant intactId="EBI-710484">
        <id>O15169</id>
    </interactant>
    <interactant intactId="EBI-2865388">
        <id>Q969G2</id>
        <label>LHX4</label>
    </interactant>
    <organismsDiffer>false</organismsDiffer>
    <experiments>3</experiments>
</comment>
<comment type="interaction">
    <interactant intactId="EBI-710484">
        <id>O15169</id>
    </interactant>
    <interactant intactId="EBI-724076">
        <id>Q99750</id>
        <label>MDFI</label>
    </interactant>
    <organismsDiffer>false</organismsDiffer>
    <experiments>3</experiments>
</comment>
<comment type="interaction">
    <interactant intactId="EBI-710484">
        <id>O15169</id>
    </interactant>
    <interactant intactId="EBI-16439278">
        <id>Q6FHY5</id>
        <label>MEOX2</label>
    </interactant>
    <organismsDiffer>false</organismsDiffer>
    <experiments>3</experiments>
</comment>
<comment type="interaction">
    <interactant intactId="EBI-710484">
        <id>O15169</id>
    </interactant>
    <interactant intactId="EBI-10172526">
        <id>Q9UJV3-2</id>
        <label>MID2</label>
    </interactant>
    <organismsDiffer>false</organismsDiffer>
    <experiments>3</experiments>
</comment>
<comment type="interaction">
    <interactant intactId="EBI-710484">
        <id>O15169</id>
    </interactant>
    <interactant intactId="EBI-11522433">
        <id>Q5JR59-3</id>
        <label>MTUS2</label>
    </interactant>
    <organismsDiffer>false</organismsDiffer>
    <experiments>3</experiments>
</comment>
<comment type="interaction">
    <interactant intactId="EBI-710484">
        <id>O15169</id>
    </interactant>
    <interactant intactId="EBI-447544">
        <id>P01106</id>
        <label>MYC</label>
    </interactant>
    <organismsDiffer>false</organismsDiffer>
    <experiments>10</experiments>
</comment>
<comment type="interaction">
    <interactant intactId="EBI-710484">
        <id>O15169</id>
    </interactant>
    <interactant intactId="EBI-989143">
        <id>P35813</id>
        <label>PPM1A</label>
    </interactant>
    <organismsDiffer>false</organismsDiffer>
    <experiments>2</experiments>
</comment>
<comment type="interaction">
    <interactant intactId="EBI-710484">
        <id>O15169</id>
    </interactant>
    <interactant intactId="EBI-357253">
        <id>P62136</id>
        <label>PPP1CA</label>
    </interactant>
    <organismsDiffer>false</organismsDiffer>
    <experiments>4</experiments>
</comment>
<comment type="interaction">
    <interactant intactId="EBI-710484">
        <id>O15169</id>
    </interactant>
    <interactant intactId="EBI-1050964">
        <id>O43586</id>
        <label>PSTPIP1</label>
    </interactant>
    <organismsDiffer>false</organismsDiffer>
    <experiments>3</experiments>
</comment>
<comment type="interaction">
    <interactant intactId="EBI-710484">
        <id>O15169</id>
    </interactant>
    <interactant intactId="EBI-2129175">
        <id>Q6ZNA4</id>
        <label>RNF111</label>
    </interactant>
    <organismsDiffer>false</organismsDiffer>
    <experiments>2</experiments>
</comment>
<comment type="interaction">
    <interactant intactId="EBI-710484">
        <id>O15169</id>
    </interactant>
    <interactant intactId="EBI-12023020">
        <id>Q96KG9-4</id>
        <label>SCYL1</label>
    </interactant>
    <organismsDiffer>false</organismsDiffer>
    <experiments>3</experiments>
</comment>
<comment type="interaction">
    <interactant intactId="EBI-710484">
        <id>O15169</id>
    </interactant>
    <interactant intactId="EBI-3861591">
        <id>O15105</id>
        <label>SMAD7</label>
    </interactant>
    <organismsDiffer>false</organismsDiffer>
    <experiments>8</experiments>
</comment>
<comment type="interaction">
    <interactant intactId="EBI-710484">
        <id>O15169</id>
    </interactant>
    <interactant intactId="EBI-5235340">
        <id>Q7Z699</id>
        <label>SPRED1</label>
    </interactant>
    <organismsDiffer>false</organismsDiffer>
    <experiments>3</experiments>
</comment>
<comment type="interaction">
    <interactant intactId="EBI-710484">
        <id>O15169</id>
    </interactant>
    <interactant intactId="EBI-714135">
        <id>O75558</id>
        <label>STX11</label>
    </interactant>
    <organismsDiffer>false</organismsDiffer>
    <experiments>3</experiments>
</comment>
<comment type="interaction">
    <interactant intactId="EBI-710484">
        <id>O15169</id>
    </interactant>
    <interactant intactId="EBI-80140">
        <id>P63165</id>
        <label>SUMO1</label>
    </interactant>
    <organismsDiffer>false</organismsDiffer>
    <experiments>3</experiments>
</comment>
<comment type="interaction">
    <interactant intactId="EBI-710484">
        <id>O15169</id>
    </interactant>
    <interactant intactId="EBI-10175576">
        <id>G2XKQ0</id>
        <label>SUMO1P1</label>
    </interactant>
    <organismsDiffer>false</organismsDiffer>
    <experiments>3</experiments>
</comment>
<comment type="interaction">
    <interactant intactId="EBI-710484">
        <id>O15169</id>
    </interactant>
    <interactant intactId="EBI-1105213">
        <id>Q9UBB9</id>
        <label>TFIP11</label>
    </interactant>
    <organismsDiffer>false</organismsDiffer>
    <experiments>3</experiments>
</comment>
<comment type="interaction">
    <interactant intactId="EBI-710484">
        <id>O15169</id>
    </interactant>
    <interactant intactId="EBI-714215">
        <id>Q15583</id>
        <label>TGIF1</label>
    </interactant>
    <organismsDiffer>false</organismsDiffer>
    <experiments>4</experiments>
</comment>
<comment type="interaction">
    <interactant intactId="EBI-710484">
        <id>O15169</id>
    </interactant>
    <interactant intactId="EBI-4398527">
        <id>Q9H2K2</id>
        <label>TNKS2</label>
    </interactant>
    <organismsDiffer>false</organismsDiffer>
    <experiments>2</experiments>
</comment>
<comment type="interaction">
    <interactant intactId="EBI-710484">
        <id>O15169</id>
    </interactant>
    <interactant intactId="EBI-366083">
        <id>P04637</id>
        <label>TP53</label>
    </interactant>
    <organismsDiffer>false</organismsDiffer>
    <experiments>4</experiments>
</comment>
<comment type="interaction">
    <interactant intactId="EBI-710484">
        <id>O15169</id>
    </interactant>
    <interactant intactId="EBI-355744">
        <id>Q12933</id>
        <label>TRAF2</label>
    </interactant>
    <organismsDiffer>false</organismsDiffer>
    <experiments>3</experiments>
</comment>
<comment type="interaction">
    <interactant intactId="EBI-710484">
        <id>O15169</id>
    </interactant>
    <interactant intactId="EBI-2342111">
        <id>Q9C019</id>
        <label>TRIM15</label>
    </interactant>
    <organismsDiffer>false</organismsDiffer>
    <experiments>3</experiments>
</comment>
<comment type="interaction">
    <interactant intactId="EBI-710484">
        <id>O15169</id>
    </interactant>
    <interactant intactId="EBI-719493">
        <id>P14373</id>
        <label>TRIM27</label>
    </interactant>
    <organismsDiffer>false</organismsDiffer>
    <experiments>3</experiments>
</comment>
<comment type="interaction">
    <interactant intactId="EBI-710484">
        <id>O15169</id>
    </interactant>
    <interactant intactId="EBI-702370">
        <id>Q14134</id>
        <label>TRIM29</label>
    </interactant>
    <organismsDiffer>false</organismsDiffer>
    <experiments>2</experiments>
</comment>
<comment type="interaction">
    <interactant intactId="EBI-710484">
        <id>O15169</id>
    </interactant>
    <interactant intactId="EBI-741602">
        <id>O94972</id>
        <label>TRIM37</label>
    </interactant>
    <organismsDiffer>false</organismsDiffer>
    <experiments>3</experiments>
</comment>
<comment type="interaction">
    <interactant intactId="EBI-710484">
        <id>O15169</id>
    </interactant>
    <interactant intactId="EBI-742327">
        <id>Q15654</id>
        <label>TRIP6</label>
    </interactant>
    <organismsDiffer>false</organismsDiffer>
    <experiments>6</experiments>
</comment>
<comment type="interaction">
    <interactant intactId="EBI-710484">
        <id>O15169</id>
    </interactant>
    <interactant intactId="EBI-302589">
        <id>P23258</id>
        <label>TUBG1</label>
    </interactant>
    <organismsDiffer>false</organismsDiffer>
    <experiments>4</experiments>
</comment>
<comment type="interaction">
    <interactant intactId="EBI-710484">
        <id>O15169</id>
    </interactant>
    <interactant intactId="EBI-1046864">
        <id>Q9H7D7</id>
        <label>WDR26</label>
    </interactant>
    <organismsDiffer>false</organismsDiffer>
    <experiments>4</experiments>
</comment>
<comment type="interaction">
    <interactant intactId="EBI-710484">
        <id>O15169</id>
    </interactant>
    <interactant intactId="EBI-1044059">
        <id>P46937</id>
        <label>YAP1</label>
    </interactant>
    <organismsDiffer>false</organismsDiffer>
    <experiments>11</experiments>
</comment>
<comment type="interaction">
    <interactant intactId="EBI-710484">
        <id>O15169</id>
    </interactant>
    <interactant intactId="EBI-3918996">
        <id>Q9HCK0</id>
        <label>ZBTB26</label>
    </interactant>
    <organismsDiffer>false</organismsDiffer>
    <experiments>3</experiments>
</comment>
<comment type="interaction">
    <interactant intactId="EBI-710484">
        <id>O15169</id>
    </interactant>
    <interactant intactId="EBI-10187928">
        <id>Q96K21-3</id>
        <label>ZFYVE19</label>
    </interactant>
    <organismsDiffer>false</organismsDiffer>
    <experiments>3</experiments>
</comment>
<comment type="interaction">
    <interactant intactId="EBI-710484">
        <id>O15169</id>
    </interactant>
    <interactant intactId="EBI-8069633">
        <id>P70039</id>
        <label>apc</label>
    </interactant>
    <organismsDiffer>true</organismsDiffer>
    <experiments>2</experiments>
</comment>
<comment type="interaction">
    <interactant intactId="EBI-710484">
        <id>O15169</id>
    </interactant>
    <interactant intactId="EBI-397872">
        <id>Q02248</id>
        <label>Ctnnb1</label>
    </interactant>
    <organismsDiffer>true</organismsDiffer>
    <experiments>5</experiments>
</comment>
<comment type="interaction">
    <interactant intactId="EBI-710484">
        <id>O15169</id>
    </interactant>
    <interactant intactId="EBI-3833365">
        <id>G1T8E2</id>
        <label>GSK3B</label>
    </interactant>
    <organismsDiffer>true</organismsDiffer>
    <experiments>2</experiments>
</comment>
<comment type="interaction">
    <interactant intactId="EBI-710484">
        <id>O15169</id>
    </interactant>
    <interactant intactId="EBI-646015">
        <id>Q99ML9</id>
        <label>Rnf111</label>
    </interactant>
    <organismsDiffer>true</organismsDiffer>
    <experiments>5</experiments>
</comment>
<comment type="interaction">
    <interactant intactId="EBI-10987526">
        <id>O15169-2</id>
    </interactant>
    <interactant intactId="EBI-910915">
        <id>O75581</id>
        <label>LRP6</label>
    </interactant>
    <organismsDiffer>false</organismsDiffer>
    <experiments>3</experiments>
</comment>
<comment type="subcellular location">
    <subcellularLocation>
        <location evidence="14">Cytoplasm</location>
    </subcellularLocation>
    <subcellularLocation>
        <location evidence="16">Nucleus</location>
    </subcellularLocation>
    <subcellularLocation>
        <location evidence="2">Membrane</location>
    </subcellularLocation>
    <subcellularLocation>
        <location evidence="2">Cell membrane</location>
    </subcellularLocation>
    <text evidence="2 16">MACF1 is required for its translocation to cell membrane (By similarity). On UV irradiation, translocates to the nucleus and colocalizes with DAAX (PubMed:17210684).</text>
</comment>
<comment type="alternative products">
    <event type="alternative splicing"/>
    <isoform>
        <id>O15169-1</id>
        <name>1</name>
        <sequence type="displayed"/>
    </isoform>
    <isoform>
        <id>O15169-2</id>
        <name>2</name>
        <sequence type="described" ref="VSP_019398"/>
    </isoform>
</comment>
<comment type="tissue specificity">
    <text>Ubiquitously expressed.</text>
</comment>
<comment type="domain">
    <text evidence="19">The tankyrase-binding motif (also named TBD) is required for interaction with tankyrase TNKS and TNKS2.</text>
</comment>
<comment type="PTM">
    <text evidence="17 27">Phosphorylation and dephosphorylation of AXIN1 regulates assembly and function of the beta-catenin complex. Phosphorylated by CK1 and GSK3B. Dephosphorylated by PPP1CA and PPP2CA. Phosphorylation by CK1 enhances binding of GSK3B to AXIN1.</text>
</comment>
<comment type="PTM">
    <text evidence="20">ADP-ribosylated by tankyrase TNKS and TNKS2. Poly-ADP-ribosylated protein is recognized by RNF146, followed by ubiquitination at 'Lys-48' and subsequent activation of the Wnt signaling pathway.</text>
</comment>
<comment type="PTM">
    <text evidence="18 20 24">Ubiquitinated by RNF146 when poly-ADP-ribosylated, leading to its degradation and subsequent activation of the Wnt signaling pathway. Sumoylation at Lys-857 and Lys-860 prevents ubiquitination and degradation. Sumoylation is required for AXIN1-mediated JNK activation. Deubiquitinated by USP34, deubiquitinated downstream of beta-catenin stabilization step: deubiquitination is important for nuclear accumulation during Wnt signaling to positively regulate beta-catenin (CTNBB1)-mediated transcription. Ubiquitination by SIAH1 and SIAH2 induces its proteasomal degradation as part of the activation of the Wnt signaling pathway (PubMed:28546513).</text>
</comment>
<comment type="disease" evidence="9">
    <disease id="DI-01708">
        <name>Hepatocellular carcinoma</name>
        <acronym>HCC</acronym>
        <description>A primary malignant neoplasm of epithelial liver cells. The major risk factors for HCC are chronic hepatitis B virus (HBV) infection, chronic hepatitis C virus (HCV) infection, prolonged dietary aflatoxin exposure, alcoholic cirrhosis, and cirrhosis due to other causes.</description>
        <dbReference type="MIM" id="114550"/>
    </disease>
    <text>The gene represented in this entry is involved in disease pathogenesis.</text>
</comment>
<comment type="disease" evidence="15">
    <disease id="DI-02877">
        <name>Caudal duplication anomaly</name>
        <acronym>CADUA</acronym>
        <description>A condition characterized by the occurrence of duplications of different organs in the caudal region.</description>
        <dbReference type="MIM" id="607864"/>
    </disease>
    <text>The disease is caused by variants affecting the gene represented in this entry. Caudal duplication anomaly is associated with hypermethylation of the AXIN1 promoter.</text>
</comment>
<comment type="disease" evidence="26">
    <disease id="DI-06785">
        <name>Craniometadiaphyseal osteosclerosis with hip dysplasia</name>
        <acronym>CMDOH</acronym>
        <description>An autosomal recessive skeletal dysplasia characterized by macrocephaly, cranial hyperostosis, and vertebral endplate sclerosis. Other frequent findings include hip dysplasia, heart malformations, variable developmental delay, and hematological anomalies. Bone biopsy shows evidence of increased osteoblast and reduced osteoclast function at the growth plate resorption zone, leading to coarse trabeculae.</description>
        <dbReference type="MIM" id="620558"/>
    </disease>
    <text>The disease is caused by variants affecting the gene represented in this entry.</text>
</comment>
<comment type="sequence caution" evidence="29">
    <conflict type="erroneous initiation">
        <sequence resource="EMBL-CDS" id="AAC51624"/>
    </conflict>
    <text>Extended N-terminus.</text>
</comment>
<comment type="online information" name="Atlas of Genetics and Cytogenetics in Oncology and Haematology">
    <link uri="https://atlasgeneticsoncology.org/gene/379/AXIN1"/>
</comment>
<organism>
    <name type="scientific">Homo sapiens</name>
    <name type="common">Human</name>
    <dbReference type="NCBI Taxonomy" id="9606"/>
    <lineage>
        <taxon>Eukaryota</taxon>
        <taxon>Metazoa</taxon>
        <taxon>Chordata</taxon>
        <taxon>Craniata</taxon>
        <taxon>Vertebrata</taxon>
        <taxon>Euteleostomi</taxon>
        <taxon>Mammalia</taxon>
        <taxon>Eutheria</taxon>
        <taxon>Euarchontoglires</taxon>
        <taxon>Primates</taxon>
        <taxon>Haplorrhini</taxon>
        <taxon>Catarrhini</taxon>
        <taxon>Hominidae</taxon>
        <taxon>Homo</taxon>
    </lineage>
</organism>